<proteinExistence type="evidence at protein level"/>
<name>ASC_HUMAN</name>
<reference key="1">
    <citation type="journal article" date="1999" name="J. Biol. Chem.">
        <title>ASC, a novel 22-kDa protein, aggregates during apoptosis of human promyelocytic leukemia HL-60 cells.</title>
        <authorList>
            <person name="Masumoto J."/>
            <person name="Taniguchi S."/>
            <person name="Ayukawa K."/>
            <person name="Sarvotham H."/>
            <person name="Kishino T."/>
            <person name="Niikawa N."/>
            <person name="Hidaka E."/>
            <person name="Katsuyama T."/>
            <person name="Higuchi T."/>
            <person name="Sagara J."/>
        </authorList>
    </citation>
    <scope>NUCLEOTIDE SEQUENCE [MRNA] (ISOFORM 1)</scope>
    <source>
        <tissue>Leukemia</tissue>
    </source>
</reference>
<reference key="2">
    <citation type="journal article" date="2000" name="Cancer Res.">
        <title>TMS1, a novel proapoptotic caspase recruitment domain protein, is a target of methylation-induced gene silencing in human breast cancers.</title>
        <authorList>
            <person name="Conway K.E."/>
            <person name="McConnell B.B."/>
            <person name="Bowring C.E."/>
            <person name="Donald C.D."/>
            <person name="Warren S.T."/>
            <person name="Vertino P.M."/>
        </authorList>
    </citation>
    <scope>NUCLEOTIDE SEQUENCE [GENOMIC DNA / MRNA] (ISOFORMS 1 AND 2)</scope>
    <source>
        <tissue>Fibroblast</tissue>
    </source>
</reference>
<reference key="3">
    <citation type="journal article" date="2009" name="Mediators Inflamm.">
        <title>A splice variant of ASC regulates IL-1beta release and aggregates differently from intact ASC.</title>
        <authorList>
            <person name="Matsushita K."/>
            <person name="Takeoka M."/>
            <person name="Sagara J."/>
            <person name="Itano N."/>
            <person name="Kurose Y."/>
            <person name="Nakamura A."/>
            <person name="Taniguchi S."/>
        </authorList>
    </citation>
    <scope>NUCLEOTIDE SEQUENCE (ISOFORM 2)</scope>
    <scope>FUNCTION (ISOFORM 2)</scope>
    <scope>MASS SPECTROMETRY (ISOFORM 2)</scope>
</reference>
<reference key="4">
    <citation type="submission" date="2000-09" db="EMBL/GenBank/DDBJ databases">
        <title>Pycard a PYD and CARD containing molecule.</title>
        <authorList>
            <person name="Martinon F."/>
            <person name="Hofmann K."/>
            <person name="Tschopp J."/>
        </authorList>
    </citation>
    <scope>NUCLEOTIDE SEQUENCE (ISOFORM 1)</scope>
</reference>
<reference key="5">
    <citation type="submission" date="2001-05" db="EMBL/GenBank/DDBJ databases">
        <title>CARD5 protein is a CARD/PYRIN family member that is involved in apoptosis signal transduction.</title>
        <authorList>
            <person name="Bertin J."/>
        </authorList>
    </citation>
    <scope>NUCLEOTIDE SEQUENCE (ISOFORM 1)</scope>
</reference>
<reference key="6">
    <citation type="journal article" date="2004" name="Nat. Genet.">
        <title>Complete sequencing and characterization of 21,243 full-length human cDNAs.</title>
        <authorList>
            <person name="Ota T."/>
            <person name="Suzuki Y."/>
            <person name="Nishikawa T."/>
            <person name="Otsuki T."/>
            <person name="Sugiyama T."/>
            <person name="Irie R."/>
            <person name="Wakamatsu A."/>
            <person name="Hayashi K."/>
            <person name="Sato H."/>
            <person name="Nagai K."/>
            <person name="Kimura K."/>
            <person name="Makita H."/>
            <person name="Sekine M."/>
            <person name="Obayashi M."/>
            <person name="Nishi T."/>
            <person name="Shibahara T."/>
            <person name="Tanaka T."/>
            <person name="Ishii S."/>
            <person name="Yamamoto J."/>
            <person name="Saito K."/>
            <person name="Kawai Y."/>
            <person name="Isono Y."/>
            <person name="Nakamura Y."/>
            <person name="Nagahari K."/>
            <person name="Murakami K."/>
            <person name="Yasuda T."/>
            <person name="Iwayanagi T."/>
            <person name="Wagatsuma M."/>
            <person name="Shiratori A."/>
            <person name="Sudo H."/>
            <person name="Hosoiri T."/>
            <person name="Kaku Y."/>
            <person name="Kodaira H."/>
            <person name="Kondo H."/>
            <person name="Sugawara M."/>
            <person name="Takahashi M."/>
            <person name="Kanda K."/>
            <person name="Yokoi T."/>
            <person name="Furuya T."/>
            <person name="Kikkawa E."/>
            <person name="Omura Y."/>
            <person name="Abe K."/>
            <person name="Kamihara K."/>
            <person name="Katsuta N."/>
            <person name="Sato K."/>
            <person name="Tanikawa M."/>
            <person name="Yamazaki M."/>
            <person name="Ninomiya K."/>
            <person name="Ishibashi T."/>
            <person name="Yamashita H."/>
            <person name="Murakawa K."/>
            <person name="Fujimori K."/>
            <person name="Tanai H."/>
            <person name="Kimata M."/>
            <person name="Watanabe M."/>
            <person name="Hiraoka S."/>
            <person name="Chiba Y."/>
            <person name="Ishida S."/>
            <person name="Ono Y."/>
            <person name="Takiguchi S."/>
            <person name="Watanabe S."/>
            <person name="Yosida M."/>
            <person name="Hotuta T."/>
            <person name="Kusano J."/>
            <person name="Kanehori K."/>
            <person name="Takahashi-Fujii A."/>
            <person name="Hara H."/>
            <person name="Tanase T.-O."/>
            <person name="Nomura Y."/>
            <person name="Togiya S."/>
            <person name="Komai F."/>
            <person name="Hara R."/>
            <person name="Takeuchi K."/>
            <person name="Arita M."/>
            <person name="Imose N."/>
            <person name="Musashino K."/>
            <person name="Yuuki H."/>
            <person name="Oshima A."/>
            <person name="Sasaki N."/>
            <person name="Aotsuka S."/>
            <person name="Yoshikawa Y."/>
            <person name="Matsunawa H."/>
            <person name="Ichihara T."/>
            <person name="Shiohata N."/>
            <person name="Sano S."/>
            <person name="Moriya S."/>
            <person name="Momiyama H."/>
            <person name="Satoh N."/>
            <person name="Takami S."/>
            <person name="Terashima Y."/>
            <person name="Suzuki O."/>
            <person name="Nakagawa S."/>
            <person name="Senoh A."/>
            <person name="Mizoguchi H."/>
            <person name="Goto Y."/>
            <person name="Shimizu F."/>
            <person name="Wakebe H."/>
            <person name="Hishigaki H."/>
            <person name="Watanabe T."/>
            <person name="Sugiyama A."/>
            <person name="Takemoto M."/>
            <person name="Kawakami B."/>
            <person name="Yamazaki M."/>
            <person name="Watanabe K."/>
            <person name="Kumagai A."/>
            <person name="Itakura S."/>
            <person name="Fukuzumi Y."/>
            <person name="Fujimori Y."/>
            <person name="Komiyama M."/>
            <person name="Tashiro H."/>
            <person name="Tanigami A."/>
            <person name="Fujiwara T."/>
            <person name="Ono T."/>
            <person name="Yamada K."/>
            <person name="Fujii Y."/>
            <person name="Ozaki K."/>
            <person name="Hirao M."/>
            <person name="Ohmori Y."/>
            <person name="Kawabata A."/>
            <person name="Hikiji T."/>
            <person name="Kobatake N."/>
            <person name="Inagaki H."/>
            <person name="Ikema Y."/>
            <person name="Okamoto S."/>
            <person name="Okitani R."/>
            <person name="Kawakami T."/>
            <person name="Noguchi S."/>
            <person name="Itoh T."/>
            <person name="Shigeta K."/>
            <person name="Senba T."/>
            <person name="Matsumura K."/>
            <person name="Nakajima Y."/>
            <person name="Mizuno T."/>
            <person name="Morinaga M."/>
            <person name="Sasaki M."/>
            <person name="Togashi T."/>
            <person name="Oyama M."/>
            <person name="Hata H."/>
            <person name="Watanabe M."/>
            <person name="Komatsu T."/>
            <person name="Mizushima-Sugano J."/>
            <person name="Satoh T."/>
            <person name="Shirai Y."/>
            <person name="Takahashi Y."/>
            <person name="Nakagawa K."/>
            <person name="Okumura K."/>
            <person name="Nagase T."/>
            <person name="Nomura N."/>
            <person name="Kikuchi H."/>
            <person name="Masuho Y."/>
            <person name="Yamashita R."/>
            <person name="Nakai K."/>
            <person name="Yada T."/>
            <person name="Nakamura Y."/>
            <person name="Ohara O."/>
            <person name="Isogai T."/>
            <person name="Sugano S."/>
        </authorList>
    </citation>
    <scope>NUCLEOTIDE SEQUENCE [LARGE SCALE MRNA] (ISOFORM 1)</scope>
    <source>
        <tissue>Colon mucosa</tissue>
    </source>
</reference>
<reference key="7">
    <citation type="journal article" date="2004" name="Genome Res.">
        <title>The status, quality, and expansion of the NIH full-length cDNA project: the Mammalian Gene Collection (MGC).</title>
        <authorList>
            <consortium name="The MGC Project Team"/>
        </authorList>
    </citation>
    <scope>NUCLEOTIDE SEQUENCE [LARGE SCALE MRNA] (ISOFORM 3)</scope>
    <scope>NUCLEOTIDE SEQUENCE [LARGE SCALE MRNA] OF 4-195 (ISOFORM 1)</scope>
    <source>
        <tissue>Lymph</tissue>
        <tissue>Pancreas</tissue>
    </source>
</reference>
<reference key="8">
    <citation type="journal article" date="2000" name="Cancer Res.">
        <title>Activation of a caspase-9-mediated apoptotic pathway by subcellular redistribution of the novel caspase recruitment domain protein TMS1.</title>
        <authorList>
            <person name="McConnell B.B."/>
            <person name="Vertino P.M."/>
        </authorList>
    </citation>
    <scope>FUNCTION</scope>
    <scope>SUBCELLULAR LOCATION</scope>
</reference>
<reference key="9">
    <citation type="journal article" date="2001" name="Biochem. Biophys. Res. Commun.">
        <title>Human CARD12 is a novel CED4/Apaf-1 family member that induces apoptosis.</title>
        <authorList>
            <person name="Geddes B.J."/>
            <person name="Wang L."/>
            <person name="Huang W.-J."/>
            <person name="Lavellee M."/>
            <person name="Manji G.A."/>
            <person name="Brown M."/>
            <person name="Jurman M."/>
            <person name="Cao J."/>
            <person name="Morgenstern J."/>
            <person name="Merriam S."/>
            <person name="Glucksmann M.A."/>
            <person name="DiStefano P.S."/>
            <person name="Bertin J."/>
        </authorList>
    </citation>
    <scope>INTERACTION WITH NLRC4</scope>
</reference>
<reference key="10">
    <citation type="journal article" date="2001" name="J. Biol. Chem.">
        <title>Interaction between pyrin and the apoptotic speck protein (ASC) modulates ASC-induced apoptosis.</title>
        <authorList>
            <person name="Richards N."/>
            <person name="Schaner P."/>
            <person name="Diaz A."/>
            <person name="Stuckey J."/>
            <person name="Shelden E."/>
            <person name="Wadhwa A."/>
            <person name="Gumucio D.L."/>
        </authorList>
    </citation>
    <scope>INTERACTION WITH MEFV</scope>
</reference>
<reference key="11">
    <citation type="journal article" date="2002" name="J. Biol. Chem.">
        <title>PYPAF1: a PYRIN-containing APAF1-like protein that assembles with ASC and activates NF-kB.</title>
        <authorList>
            <person name="Manji G.A."/>
            <person name="Wang L."/>
            <person name="Geddes B.J."/>
            <person name="Brown M."/>
            <person name="Merriam S."/>
            <person name="Al-Garawi A."/>
            <person name="Mak S."/>
            <person name="Lora J.M."/>
            <person name="Briskin M."/>
            <person name="Jurman M."/>
            <person name="Cao J."/>
            <person name="DiStefano P.S."/>
            <person name="Bertin J."/>
        </authorList>
    </citation>
    <scope>INTERACTION WITH NLRP3</scope>
    <scope>DOMAIN</scope>
</reference>
<reference key="12">
    <citation type="journal article" date="2002" name="J. Biol. Chem.">
        <title>The PYRIN-CARD protein ASC is an activating adaptor for caspase-1.</title>
        <authorList>
            <person name="Srinivasula S.M."/>
            <person name="Poyet J.L."/>
            <person name="Razmara M."/>
            <person name="Datta P."/>
            <person name="Zhang Z."/>
            <person name="Alnemri E.S."/>
        </authorList>
    </citation>
    <scope>INTERACTION WITH CASP1; NLRC4 AND CARD16</scope>
</reference>
<reference key="13">
    <citation type="journal article" date="2002" name="J. Exp. Med.">
        <title>The PAAD/PYRIN-family protein ASC is a dual regulator of a conserved step in nuclear factor kappaB activation pathways.</title>
        <authorList>
            <person name="Stehlik C."/>
            <person name="Fiorentino L."/>
            <person name="Dorfleutner A."/>
            <person name="Bruey J.M."/>
            <person name="Ariza E.M."/>
            <person name="Sagara J."/>
            <person name="Reed J.C."/>
        </authorList>
    </citation>
    <scope>FUNCTION</scope>
    <scope>INTERACTION WITH CHUK AND IKBKB</scope>
</reference>
<reference key="14">
    <citation type="journal article" date="2002" name="Mol. Cell">
        <title>The inflammasome: a molecular platform triggering activation of inflammatory caspases and processing of proIL-beta.</title>
        <authorList>
            <person name="Martinon F."/>
            <person name="Burns K."/>
            <person name="Tschopp J."/>
        </authorList>
    </citation>
    <scope>IDENTIFICATION IN NLPR1 INFLAMMASOME</scope>
</reference>
<reference key="15">
    <citation type="journal article" date="2003" name="Biochem. Biophys. Res. Commun.">
        <title>ASC is an activating adaptor for NF-kappa B and caspase-8-dependent apoptosis.</title>
        <authorList>
            <person name="Masumoto J."/>
            <person name="Dowds T.A."/>
            <person name="Schaner P."/>
            <person name="Chen F.F."/>
            <person name="Ogura Y."/>
            <person name="Li M."/>
            <person name="Zhu L."/>
            <person name="Katsuyama T."/>
            <person name="Sagara J."/>
            <person name="Taniguchi S."/>
            <person name="Gumucio D.L."/>
            <person name="Nunez G."/>
            <person name="Inohara N."/>
        </authorList>
    </citation>
    <scope>FUNCTION IN APOPTOSIS</scope>
    <scope>INTERACTION WITH CASP8</scope>
    <scope>MUTAGENESIS OF LEU-12</scope>
</reference>
<reference key="16">
    <citation type="journal article" date="2003" name="Biochem. J.">
        <title>The PAAD/PYRIN-only protein POP1/ASC2 is a modulator of ASC-mediated nuclear-factor-kappa B and pro-caspase-1 regulation.</title>
        <authorList>
            <person name="Stehlik C."/>
            <person name="Krajewska M."/>
            <person name="Welsh K."/>
            <person name="Krajewski S."/>
            <person name="Godzik A."/>
            <person name="Reed J.C."/>
        </authorList>
    </citation>
    <scope>INTERACTION WITH PYDC1</scope>
    <scope>DOMAIN</scope>
    <scope>PHOSPHORYLATION</scope>
</reference>
<reference key="17">
    <citation type="journal article" date="2003" name="J. Immunol.">
        <title>Apoptosis-associated speck-like protein containing a caspase recruitment domain is a regulator of procaspase-1 activation.</title>
        <authorList>
            <person name="Stehlik C."/>
            <person name="Lee S.H."/>
            <person name="Dorfleutner A."/>
            <person name="Stassinopoulos A."/>
            <person name="Sagara J."/>
            <person name="Reed J.C."/>
        </authorList>
    </citation>
    <scope>INTERACTION WITH CASP1 AND RIPK2</scope>
</reference>
<reference key="18">
    <citation type="journal article" date="2004" name="Immunity">
        <title>NALP3 forms an IL-1beta-processing inflammasome with increased activity in Muckle-Wells autoinflammatory disorder.</title>
        <authorList>
            <person name="Agostini L."/>
            <person name="Martinon F."/>
            <person name="Burns K."/>
            <person name="McDermott M.F."/>
            <person name="Hawkins P.N."/>
            <person name="Tschopp J."/>
        </authorList>
    </citation>
    <scope>FUNCTION IN NLRP2 AND NLRP3 INFLAMMASOMES</scope>
    <scope>INTERACTION WITH NLRP2 AND NLRP3</scope>
    <scope>SUBCELLULAR LOCATION</scope>
</reference>
<reference key="19">
    <citation type="journal article" date="2004" name="Int. Immunol.">
        <title>PYNOD, a novel Apaf-1/CED4-like protein is an inhibitor of ASC and caspase-1.</title>
        <authorList>
            <person name="Wang Y."/>
            <person name="Hasegawa M."/>
            <person name="Imamura R."/>
            <person name="Kinoshita T."/>
            <person name="Kondo C."/>
            <person name="Konaka K."/>
            <person name="Suda T."/>
        </authorList>
    </citation>
    <scope>INTERACTION WITH NLRP10</scope>
</reference>
<reference key="20">
    <citation type="journal article" date="2004" name="J. Biol. Chem.">
        <title>Cryopyrin-induced interleukin 1beta secretion in monocytic cells: enhanced activity of disease-associated mutants and requirement for ASC.</title>
        <authorList>
            <person name="Dowds T.A."/>
            <person name="Masumoto J."/>
            <person name="Zhu L."/>
            <person name="Inohara N."/>
            <person name="Nunez G."/>
        </authorList>
    </citation>
    <scope>INTERACTION WITH NLRP3</scope>
</reference>
<reference key="21">
    <citation type="journal article" date="2004" name="J. Biol. Chem.">
        <title>PAN1/NALP2/PYPAF2, an inducible inflammatory mediator that regulates NF-kappaB and caspase-1 activation in macrophages.</title>
        <authorList>
            <person name="Bruey J.-M."/>
            <person name="Bruey-Sedano N."/>
            <person name="Newman R."/>
            <person name="Chandler S."/>
            <person name="Stehlik C."/>
            <person name="Reed J.C."/>
        </authorList>
    </citation>
    <scope>INTERACTION WITH NLRP2</scope>
    <scope>MUTAGENESIS OF GLU-13</scope>
</reference>
<reference key="22">
    <citation type="journal article" date="2004" name="Nat. Cell Biol.">
        <title>ASC is a Bax adaptor and regulates the p53-Bax mitochondrial apoptosis pathway.</title>
        <authorList>
            <person name="Ohtsuka T."/>
            <person name="Ryu H."/>
            <person name="Minamishima Y.A."/>
            <person name="Macip S."/>
            <person name="Sagara J."/>
            <person name="Nakayama K.I."/>
            <person name="Aaronson S.A."/>
            <person name="Lee S.W."/>
        </authorList>
    </citation>
    <scope>FUNCTION IN APOPTOSIS</scope>
    <scope>SUBCELLULAR LOCATION</scope>
    <scope>INTERACTION WITH BAX</scope>
</reference>
<reference key="23">
    <citation type="journal article" date="2005" name="Biochemistry">
        <title>Role of charged and hydrophobic residues in the oligomerization of the PYRIN domain of ASC.</title>
        <authorList>
            <person name="Moriya M."/>
            <person name="Taniguchi S."/>
            <person name="Wu P."/>
            <person name="Liepinsh E."/>
            <person name="Otting G."/>
            <person name="Sagara J."/>
        </authorList>
    </citation>
    <scope>SELF-ASSOCIATION</scope>
    <scope>MUTAGENESIS OF ILE-8; LEU-12; GLU-13; LEU-15; GLU-19; LEU-20; LYS-21; PHE-23; LEU-25; LYS-26; LEU-27; PRO-40; ARG-41; LEU-45; MET-47; ASP-48; LEU-52; LEU-56; GLU-62; GLU-67; LEU-68; VAL-72 AND MET-76</scope>
</reference>
<reference key="24">
    <citation type="journal article" date="2006" name="Cell Death Differ.">
        <title>Cryopyrin and pyrin activate caspase-1, but not NF-kappaB, via ASC oligomerization.</title>
        <authorList>
            <person name="Yu J.W."/>
            <person name="Wu J."/>
            <person name="Zhang Z."/>
            <person name="Datta P."/>
            <person name="Ibrahimi I."/>
            <person name="Taniguchi S."/>
            <person name="Sagara J."/>
            <person name="Fernandes-Alnemri T."/>
            <person name="Alnemri E.S."/>
        </authorList>
    </citation>
    <scope>ASSOCIATION WITH INFLAMMASOMES</scope>
</reference>
<reference key="25">
    <citation type="journal article" date="2006" name="J. Immunol.">
        <title>ASC directs NF-kappaB activation by regulating receptor interacting protein-2 (RIP2) caspase-1 interactions.</title>
        <authorList>
            <person name="Sarkar A."/>
            <person name="Duncan M."/>
            <person name="Hart J."/>
            <person name="Hertlein E."/>
            <person name="Guttridge D.C."/>
            <person name="Wewers M.D."/>
        </authorList>
    </citation>
    <scope>FUNCTION</scope>
    <scope>INTERACTION WITH CASP1</scope>
</reference>
<reference key="26">
    <citation type="journal article" date="2006" name="J. Immunol.">
        <title>ASC mediates the induction of multiple cytokines by Porphyromonas gingivalis via caspase-1-dependent and -independent pathways.</title>
        <authorList>
            <person name="Taxman D.J."/>
            <person name="Zhang J."/>
            <person name="Champagne C."/>
            <person name="Bergstralh D.T."/>
            <person name="Iocca H.A."/>
            <person name="Lich J.D."/>
            <person name="Ting J.P."/>
        </authorList>
    </citation>
    <scope>FUNCTION</scope>
</reference>
<reference key="27">
    <citation type="journal article" date="2007" name="Cell Death Differ.">
        <title>The pyroptosome: a supramolecular assembly of ASC dimers mediating inflammatory cell death via caspase-1 activation.</title>
        <authorList>
            <person name="Fernandes-Alnemri T."/>
            <person name="Wu J."/>
            <person name="Yu J.W."/>
            <person name="Datta P."/>
            <person name="Miller B."/>
            <person name="Jankowski W."/>
            <person name="Rosenberg S."/>
            <person name="Zhang J."/>
            <person name="Alnemri E.S."/>
        </authorList>
    </citation>
    <scope>FUNCTION</scope>
    <scope>SUBUNIT</scope>
</reference>
<reference key="28">
    <citation type="journal article" date="2007" name="Mol. Cell">
        <title>Reconstituted NALP1 inflammasome reveals two-step mechanism of caspase-1 activation.</title>
        <authorList>
            <person name="Faustin B."/>
            <person name="Lartigue L."/>
            <person name="Bruey J.-M."/>
            <person name="Luciano F."/>
            <person name="Sergienko E."/>
            <person name="Bailly-Maitre B."/>
            <person name="Volkmann N."/>
            <person name="Hanein D."/>
            <person name="Rouiller I."/>
            <person name="Reed J.C."/>
        </authorList>
    </citation>
    <scope>FUNCTION IN NLRP1 INFLAMMASOME</scope>
</reference>
<reference key="29">
    <citation type="journal article" date="2007" name="Oncogene">
        <title>Mechanism of ASC-mediated apoptosis: bid-dependent apoptosis in type II cells.</title>
        <authorList>
            <person name="Hasegawa M."/>
            <person name="Kawase K."/>
            <person name="Inohara N."/>
            <person name="Imamura R."/>
            <person name="Yeh W.C."/>
            <person name="Kinoshita T."/>
            <person name="Suda T."/>
        </authorList>
    </citation>
    <scope>FUNCTION IN APOPTOSIS</scope>
</reference>
<reference key="30">
    <citation type="journal article" date="2007" name="Infect. Immun.">
        <title>Cellular pyrin domain-only protein 2 is a candidate regulator of inflammasome activation.</title>
        <authorList>
            <person name="Dorfleutner A."/>
            <person name="Bryan N.B."/>
            <person name="Talbott S.J."/>
            <person name="Funya K.N."/>
            <person name="Rellick S.L."/>
            <person name="Reed J.C."/>
            <person name="Shi X."/>
            <person name="Rojanasakul Y."/>
            <person name="Flynn D.C."/>
            <person name="Stehlik C."/>
        </authorList>
    </citation>
    <scope>INTERACTION WITH PYDC1 AND PYDC2</scope>
    <scope>DOMAIN</scope>
</reference>
<reference key="31">
    <citation type="journal article" date="2007" name="J. Immunol.">
        <title>Pyrin-only protein 2 modulates NF-kappaB and disrupts ASC:CLR interactions.</title>
        <authorList>
            <person name="Bedoya F."/>
            <person name="Sandler L.L."/>
            <person name="Harton J.A."/>
        </authorList>
    </citation>
    <scope>INTERACTION WITH PYDC2</scope>
</reference>
<reference key="32">
    <citation type="journal article" date="2008" name="J. Biol. Chem.">
        <title>Mapping of POP1-binding site on pyrin domain of ASC.</title>
        <authorList>
            <person name="Srimathi T."/>
            <person name="Robbins S.L."/>
            <person name="Dubas R.L."/>
            <person name="Chang H."/>
            <person name="Cheng H."/>
            <person name="Roder H."/>
            <person name="Park Y.C."/>
        </authorList>
    </citation>
    <scope>INTERACTION WITH PYDC1</scope>
    <scope>MUTAGENESIS OF GLU-13; TYR-36 AND ASP-48</scope>
</reference>
<reference key="33">
    <citation type="journal article" date="2009" name="J. Immunol.">
        <title>Activation of inflammasomes requires intracellular redistribution of the apoptotic speck-like protein containing a caspase recruitment domain.</title>
        <authorList>
            <person name="Bryan N.B."/>
            <person name="Dorfleutner A."/>
            <person name="Rojanasakul Y."/>
            <person name="Stehlik C."/>
        </authorList>
    </citation>
    <scope>FUNCTION</scope>
    <scope>SUBCELLULAR LOCATION</scope>
</reference>
<reference key="34">
    <citation type="journal article" date="2009" name="J. Immunol.">
        <title>Mechanism and repertoire of ASC-mediated gene expression.</title>
        <authorList>
            <person name="Hasegawa M."/>
            <person name="Imamura R."/>
            <person name="Motani K."/>
            <person name="Nishiuchi T."/>
            <person name="Matsumoto N."/>
            <person name="Kinoshita T."/>
            <person name="Suda T."/>
        </authorList>
    </citation>
    <scope>FUNCTION</scope>
</reference>
<reference key="35">
    <citation type="journal article" date="2009" name="Nature">
        <title>AIM2 activates the inflammasome and cell death in response to cytoplasmic DNA.</title>
        <authorList>
            <person name="Fernandes-Alnemri T."/>
            <person name="Yu J.W."/>
            <person name="Datta P."/>
            <person name="Wu J."/>
            <person name="Alnemri E.S."/>
        </authorList>
    </citation>
    <scope>FUNCTION IN AIM2 INFLAMMASOME</scope>
    <scope>INTERACTION WITH AIM2</scope>
    <scope>DOMAIN</scope>
</reference>
<reference key="36">
    <citation type="journal article" date="2009" name="Nature">
        <title>AIM2 recognizes cytosolic dsDNA and forms a caspase-1-activating inflammasome with ASC.</title>
        <authorList>
            <person name="Hornung V."/>
            <person name="Ablasser A."/>
            <person name="Charrel-Dennis M."/>
            <person name="Bauernfeind F."/>
            <person name="Horvath G."/>
            <person name="Caffrey D.R."/>
            <person name="Latz E."/>
            <person name="Fitzgerald K.A."/>
        </authorList>
    </citation>
    <scope>FUNCTION IN AIM2 INFLAMMASOME</scope>
    <scope>INTERACTION WITH AIM2</scope>
    <scope>DOMAIN</scope>
</reference>
<reference key="37">
    <citation type="journal article" date="2010" name="J. Inflamm. (Lond.)">
        <title>Differential splicing of the apoptosis-associated speck like protein containing a caspase recruitment domain (ASC) regulates inflammasomes.</title>
        <authorList>
            <person name="Bryan N.B."/>
            <person name="Dorfleutner A."/>
            <person name="Kramer S.J."/>
            <person name="Yun C."/>
            <person name="Rojanasakul Y."/>
            <person name="Stehlik C."/>
        </authorList>
    </citation>
    <scope>FUNCTION (ISOFORMS 2 AND 3)</scope>
</reference>
<reference key="38">
    <citation type="journal article" date="2010" name="Nat. Immunol.">
        <title>Recognition of RNA virus by RIG-I results in activation of CARD9 and inflammasome signaling for interleukin 1 beta production.</title>
        <authorList>
            <person name="Poeck H."/>
            <person name="Bscheider M."/>
            <person name="Gross O."/>
            <person name="Finger K."/>
            <person name="Roth S."/>
            <person name="Rebsamen M."/>
            <person name="Hannesschlager N."/>
            <person name="Schlee M."/>
            <person name="Rothenfusser S."/>
            <person name="Barchet W."/>
            <person name="Kato H."/>
            <person name="Akira S."/>
            <person name="Inoue S."/>
            <person name="Endres S."/>
            <person name="Peschel C."/>
            <person name="Hartmann G."/>
            <person name="Hornung V."/>
            <person name="Ruland J."/>
        </authorList>
    </citation>
    <scope>FUNCTION</scope>
    <scope>INTERACTION WITH RIGI</scope>
</reference>
<reference key="39">
    <citation type="journal article" date="2011" name="BMC Syst. Biol.">
        <title>Initial characterization of the human central proteome.</title>
        <authorList>
            <person name="Burkard T.R."/>
            <person name="Planyavsky M."/>
            <person name="Kaupe I."/>
            <person name="Breitwieser F.P."/>
            <person name="Buerckstuemmer T."/>
            <person name="Bennett K.L."/>
            <person name="Superti-Furga G."/>
            <person name="Colinge J."/>
        </authorList>
    </citation>
    <scope>IDENTIFICATION BY MASS SPECTROMETRY [LARGE SCALE ANALYSIS]</scope>
</reference>
<reference key="40">
    <citation type="journal article" date="2011" name="Cell Host Microbe">
        <title>IFI16 acts as a nuclear pathogen sensor to induce the inflammasome in response to Kaposi Sarcoma-associated herpesvirus infection.</title>
        <authorList>
            <person name="Kerur N."/>
            <person name="Veettil M.V."/>
            <person name="Sharma-Walia N."/>
            <person name="Bottero V."/>
            <person name="Sadagopan S."/>
            <person name="Otageri P."/>
            <person name="Chandran B."/>
        </authorList>
    </citation>
    <scope>INTERACTION WITH IFI16</scope>
</reference>
<reference key="41">
    <citation type="journal article" date="2011" name="J. Biol. Chem.">
        <title>The NLR adaptor ASC/PYCARD regulates DUSP10, mitogen-activated protein kinase (MAPK), and chemokine induction independent of the inflammasome.</title>
        <authorList>
            <person name="Taxman D.J."/>
            <person name="Holley-Guthrie E.A."/>
            <person name="Huang M.T."/>
            <person name="Moore C.B."/>
            <person name="Bergstralh D.T."/>
            <person name="Allen I.C."/>
            <person name="Lei Y."/>
            <person name="Gris D."/>
            <person name="Ting J.P."/>
        </authorList>
    </citation>
    <scope>FUNCTION</scope>
</reference>
<reference key="42">
    <citation type="journal article" date="2012" name="Hum. Immunol.">
        <title>Central and overlapping role of cathepsin B and inflammasome adaptor ASC in antigen presenting function of human dendritic cells.</title>
        <authorList>
            <person name="Guo X."/>
            <person name="Dhodapkar K.M."/>
        </authorList>
    </citation>
    <scope>FUNCTION</scope>
</reference>
<reference key="43">
    <citation type="journal article" date="2011" name="Nature">
        <title>A role for mitochondria in NLRP3 inflammasome activation.</title>
        <authorList>
            <person name="Zhou R."/>
            <person name="Yazdi A.S."/>
            <person name="Menu P."/>
            <person name="Tschopp J."/>
        </authorList>
    </citation>
    <scope>SUBCELLULAR LOCATION</scope>
</reference>
<reference key="44">
    <citation type="journal article" date="2013" name="J. Biol. Chem.">
        <title>Structure of the absent in melanoma 2 (AIM2) pyrin domain provides insights into the mechanisms of AIM2 autoinhibition and inflammasome assembly.</title>
        <authorList>
            <person name="Jin T."/>
            <person name="Perry A."/>
            <person name="Smith P."/>
            <person name="Jiang J."/>
            <person name="Xiao T.S."/>
        </authorList>
    </citation>
    <scope>FUNCTION</scope>
    <scope>INTERACTION WITH AIM2</scope>
</reference>
<reference key="45">
    <citation type="journal article" date="2013" name="Nat. Med.">
        <title>Activation of the Nlrp3 inflammasome in infiltrating macrophages by endocannabinoids mediates beta cell loss in type 2 diabetes.</title>
        <authorList>
            <person name="Jourdan T."/>
            <person name="Godlewski G."/>
            <person name="Cinar R."/>
            <person name="Bertola A."/>
            <person name="Szanda G."/>
            <person name="Liu J."/>
            <person name="Tam J."/>
            <person name="Han T."/>
            <person name="Mukhopadhyay B."/>
            <person name="Skarulis M.C."/>
            <person name="Ju C."/>
            <person name="Aouadi M."/>
            <person name="Czech M.P."/>
            <person name="Kunos G."/>
        </authorList>
    </citation>
    <scope>INDUCTION BY ENDOCANNABINOID ANANDAMIDE</scope>
</reference>
<reference key="46">
    <citation type="journal article" date="2013" name="Thorax">
        <title>Human respiratory syncytial virus viroporin SH: a viral recognition pathway used by the host to signal inflammasome activation.</title>
        <authorList>
            <person name="Triantafilou K."/>
            <person name="Kar S."/>
            <person name="Vakakis E."/>
            <person name="Kotecha S."/>
            <person name="Triantafilou M."/>
        </authorList>
    </citation>
    <scope>TISSUE SPECIFICITY</scope>
    <scope>SUBCELLULAR LOCATION UPON HRSV (MICROBIAL INFECTION)</scope>
</reference>
<reference key="47">
    <citation type="journal article" date="2014" name="J. Proteomics">
        <title>An enzyme assisted RP-RPLC approach for in-depth analysis of human liver phosphoproteome.</title>
        <authorList>
            <person name="Bian Y."/>
            <person name="Song C."/>
            <person name="Cheng K."/>
            <person name="Dong M."/>
            <person name="Wang F."/>
            <person name="Huang J."/>
            <person name="Sun D."/>
            <person name="Wang L."/>
            <person name="Ye M."/>
            <person name="Zou H."/>
        </authorList>
    </citation>
    <scope>IDENTIFICATION BY MASS SPECTROMETRY [LARGE SCALE ANALYSIS]</scope>
    <source>
        <tissue>Liver</tissue>
    </source>
</reference>
<reference key="48">
    <citation type="journal article" date="2015" name="Proteomics">
        <title>N-terminome analysis of the human mitochondrial proteome.</title>
        <authorList>
            <person name="Vaca Jacome A.S."/>
            <person name="Rabilloud T."/>
            <person name="Schaeffer-Reiss C."/>
            <person name="Rompais M."/>
            <person name="Ayoub D."/>
            <person name="Lane L."/>
            <person name="Bairoch A."/>
            <person name="Van Dorsselaer A."/>
            <person name="Carapito C."/>
        </authorList>
    </citation>
    <scope>IDENTIFICATION BY MASS SPECTROMETRY [LARGE SCALE ANALYSIS]</scope>
</reference>
<reference key="49">
    <citation type="journal article" date="2015" name="J. Immunol.">
        <title>MAVS Promotes Inflammasome Activation by Targeting ASC for K63-Linked Ubiquitination via the E3 Ligase TRAF3.</title>
        <authorList>
            <person name="Guan K."/>
            <person name="Wei C."/>
            <person name="Zheng Z."/>
            <person name="Song T."/>
            <person name="Wu F."/>
            <person name="Zhang Y."/>
            <person name="Cao Y."/>
            <person name="Ma S."/>
            <person name="Chen W."/>
            <person name="Xu Q."/>
            <person name="Xia W."/>
            <person name="Gu J."/>
            <person name="He X."/>
            <person name="Zhong H."/>
        </authorList>
    </citation>
    <scope>FUNCTION</scope>
    <scope>UBIQUITINATION AT LYS-174</scope>
    <scope>MUTAGENESIS OF LYS-174</scope>
    <scope>SUBCELLULAR LOCATION</scope>
</reference>
<reference key="50">
    <citation type="journal article" date="2016" name="J. Biol. Chem.">
        <title>ASC pyrin domain self-associates and binds NLRP3 protein using equivalent binding interfaces.</title>
        <authorList>
            <person name="Oroz J."/>
            <person name="Barrera-Vilarmau S."/>
            <person name="Alfonso C."/>
            <person name="Rivas G."/>
            <person name="de Alba E."/>
        </authorList>
    </citation>
    <scope>INTERACTION WITH NLRP3</scope>
</reference>
<reference key="51">
    <citation type="journal article" date="2017" name="FEBS Lett.">
        <title>The deubiquitinating enzyme, ubiquitin-specific peptidase 50, regulates inflammasome activation by targeting the ASC adaptor protein.</title>
        <authorList>
            <person name="Lee J.Y."/>
            <person name="Seo D."/>
            <person name="You J."/>
            <person name="Chung S."/>
            <person name="Park J.S."/>
            <person name="Lee J.H."/>
            <person name="Jung S.M."/>
            <person name="Lee Y.S."/>
            <person name="Park S.H."/>
        </authorList>
    </citation>
    <scope>DEUBIQUITINATED BY USP50</scope>
</reference>
<reference key="52">
    <citation type="journal article" date="2017" name="Immunity">
        <title>Inflammasome activation triggers caspase-1-mediated cleavage of cGAS to regulate responses to DNA virus infection.</title>
        <authorList>
            <person name="Wang Y."/>
            <person name="Ning X."/>
            <person name="Gao P."/>
            <person name="Wu S."/>
            <person name="Sha M."/>
            <person name="Lv M."/>
            <person name="Zhou X."/>
            <person name="Gao J."/>
            <person name="Fang R."/>
            <person name="Meng G."/>
            <person name="Su X."/>
            <person name="Jiang Z."/>
        </authorList>
    </citation>
    <scope>FUNCTION</scope>
</reference>
<reference key="53">
    <citation type="journal article" date="2018" name="Proc. Natl. Acad. Sci. U.S.A.">
        <title>Digital signaling network drives the assembly of the AIM2-ASC inflammasome.</title>
        <authorList>
            <person name="Matyszewski M."/>
            <person name="Morrone S.R."/>
            <person name="Sohn J."/>
        </authorList>
    </citation>
    <scope>FUNCTION</scope>
    <scope>INTERACTION WITH AIM2</scope>
</reference>
<reference key="54">
    <citation type="journal article" date="2019" name="Proc. Natl. Acad. Sci. U.S.A.">
        <title>Molecular mechanism for NLRP6 inflammasome assembly and activation.</title>
        <authorList>
            <person name="Shen C."/>
            <person name="Lu A."/>
            <person name="Xie W.J."/>
            <person name="Ruan J."/>
            <person name="Negro R."/>
            <person name="Egelman E.H."/>
            <person name="Fu T.M."/>
            <person name="Wu H."/>
        </authorList>
    </citation>
    <scope>FUNCTION</scope>
    <scope>SUBCELLULAR LOCATION</scope>
    <scope>INTERACTION WITH 3</scope>
</reference>
<reference key="55">
    <citation type="journal article" date="2021" name="Cell">
        <title>Phase separation drives RNA virus-induced activation of the NLRP6 inflammasome.</title>
        <authorList>
            <person name="Shen C."/>
            <person name="Li R."/>
            <person name="Negro R."/>
            <person name="Cheng J."/>
            <person name="Vora S.M."/>
            <person name="Fu T.M."/>
            <person name="Wang A."/>
            <person name="He K."/>
            <person name="Andreeva L."/>
            <person name="Gao P."/>
            <person name="Tian Z."/>
            <person name="Flavell R.A."/>
            <person name="Zhu S."/>
            <person name="Wu H."/>
        </authorList>
    </citation>
    <scope>FUNCTION</scope>
    <scope>SUBCELLULAR LOCATION</scope>
    <scope>INTERACTION WITH NLRP6</scope>
</reference>
<reference key="56">
    <citation type="journal article" date="2022" name="Sci. Adv.">
        <title>Directionality of PYD filament growth determined by the transition of NLRP3 nucleation seeds to ASC elongation.</title>
        <authorList>
            <person name="Hochheiser I.V."/>
            <person name="Behrmann H."/>
            <person name="Hagelueken G."/>
            <person name="Rodriguez-Alcazar J.F."/>
            <person name="Kopp A."/>
            <person name="Latz E."/>
            <person name="Behrmann E."/>
            <person name="Geyer M."/>
        </authorList>
    </citation>
    <scope>INTERACTION WITH NLRP3</scope>
</reference>
<reference key="57">
    <citation type="journal article" date="2021" name="Nat. Commun.">
        <title>Distinct axial and lateral interactions within homologous filaments dictate the signaling specificity and order of the AIM2-ASC inflammasome.</title>
        <authorList>
            <person name="Matyszewski M."/>
            <person name="Zheng W."/>
            <person name="Lueck J."/>
            <person name="Mazanek Z."/>
            <person name="Mohideen N."/>
            <person name="Lau A.Y."/>
            <person name="Egelman E.H."/>
            <person name="Sohn J."/>
        </authorList>
    </citation>
    <scope>FUNCTION</scope>
    <scope>INTERACTION WITH AIM2</scope>
</reference>
<reference key="58">
    <citation type="journal article" date="2021" name="Nat. Commun.">
        <title>SARS-CoV-2 N protein promotes NLRP3 inflammasome activation to induce hyperinflammation.</title>
        <authorList>
            <person name="Pan P."/>
            <person name="Shen M."/>
            <person name="Yu Z."/>
            <person name="Ge W."/>
            <person name="Chen K."/>
            <person name="Tian M."/>
            <person name="Xiao F."/>
            <person name="Wang Z."/>
            <person name="Wang J."/>
            <person name="Jia Y."/>
            <person name="Wang W."/>
            <person name="Wan P."/>
            <person name="Zhang J."/>
            <person name="Chen W."/>
            <person name="Lei Z."/>
            <person name="Chen X."/>
            <person name="Luo Z."/>
            <person name="Zhang Q."/>
            <person name="Xu M."/>
            <person name="Li G."/>
            <person name="Li Y."/>
            <person name="Wu J."/>
        </authorList>
    </citation>
    <scope>INTERACTION WITH NLRP3</scope>
</reference>
<reference key="59">
    <citation type="journal article" date="2021" name="Cell Rep.">
        <title>Peli1 facilitates NLRP3 inflammasome activation by mediating ASC ubiquitination.</title>
        <authorList>
            <person name="Zhang L."/>
            <person name="Ko C.J."/>
            <person name="Li Y."/>
            <person name="Jie Z."/>
            <person name="Zhu L."/>
            <person name="Zhou X."/>
            <person name="Xie X."/>
            <person name="Gao T."/>
            <person name="Liu T."/>
            <person name="Cheng X."/>
            <person name="Sun S.C."/>
        </authorList>
    </citation>
    <scope>FUNCTION</scope>
    <scope>MUTAGENESIS OF LYS-55</scope>
    <scope>SUBUNIT</scope>
    <scope>UBIQUITINATION AT LYS-55 BY PELI1</scope>
</reference>
<reference key="60">
    <citation type="journal article" date="2022" name="Cell. Mol. Immunol.">
        <title>USP3 deubiquitinates and stabilizes the adapter protein ASC to regulate inflammasome activation.</title>
        <authorList>
            <person name="Zhuang W."/>
            <person name="Zhang L."/>
            <person name="Zheng Y."/>
            <person name="Liu B."/>
            <person name="Ma C."/>
            <person name="Zhao W."/>
            <person name="Liu S."/>
            <person name="Liu F."/>
            <person name="Gao C."/>
        </authorList>
    </citation>
    <scope>FUNCTION</scope>
    <scope>DEUBIQUITINATION BY USP22</scope>
</reference>
<reference key="61">
    <citation type="journal article" date="2003" name="J. Mol. Biol.">
        <title>The death-domain fold of the ASC PYRIN domain, presenting a basis for PYRIN/PYRIN recognition.</title>
        <authorList>
            <person name="Liepinsh E."/>
            <person name="Barbals R."/>
            <person name="Dahl E."/>
            <person name="Sharipo A."/>
            <person name="Staub E."/>
            <person name="Otting G."/>
        </authorList>
    </citation>
    <scope>STRUCTURE BY NMR OF 1-91</scope>
    <scope>DOMAIN</scope>
</reference>
<reference key="62">
    <citation type="journal article" date="2009" name="J. Biol. Chem.">
        <title>Structure and interdomain dynamics of apoptosis-associated speck-like protein containing a CARD (ASC).</title>
        <authorList>
            <person name="de Alba E."/>
        </authorList>
    </citation>
    <scope>STRUCTURE BY NMR</scope>
</reference>
<reference evidence="66" key="63">
    <citation type="journal article" date="2014" name="Cell">
        <title>Unified polymerization mechanism for the assembly of ASC-dependent inflammasomes.</title>
        <authorList>
            <person name="Lu A."/>
            <person name="Magupalli V.G."/>
            <person name="Ruan J."/>
            <person name="Yin Q."/>
            <person name="Atianand M.K."/>
            <person name="Vos M.R."/>
            <person name="Schroder G.F."/>
            <person name="Fitzgerald K.A."/>
            <person name="Wu H."/>
            <person name="Egelman E.H."/>
        </authorList>
    </citation>
    <scope>STRUCTURE BY ELECTRON MICROSCOPY (3.80 ANGSTROMS) OF 1-91</scope>
    <scope>FUNCTION</scope>
</reference>
<reference evidence="67" key="64">
    <citation type="journal article" date="2021" name="Nat. Commun.">
        <title>Structural basis for distinct inflammasome complex assembly by human NLRP1 and CARD8.</title>
        <authorList>
            <person name="Gong Q."/>
            <person name="Robinson K."/>
            <person name="Xu C."/>
            <person name="Huynh P.T."/>
            <person name="Chong K.H.C."/>
            <person name="Tan E.Y.J."/>
            <person name="Zhang J."/>
            <person name="Boo Z.Z."/>
            <person name="Teo D.E.T."/>
            <person name="Lay K."/>
            <person name="Zhang Y."/>
            <person name="Lim J.S.Y."/>
            <person name="Goh W.I."/>
            <person name="Wright G."/>
            <person name="Zhong F.L."/>
            <person name="Reversade B."/>
            <person name="Wu B."/>
        </authorList>
    </citation>
    <scope>STRUCTURE BY ELECTRON MICROSCOPY (4.10 ANGSTROMS) OF 112-194</scope>
    <scope>SUBUNIT</scope>
</reference>
<reference evidence="68" key="65">
    <citation type="journal article" date="2021" name="Nat. Commun.">
        <title>Mechanism of filament formation in UPA-promoted CARD8 and NLRP1 inflammasomes.</title>
        <authorList>
            <person name="Robert Hollingsworth L."/>
            <person name="David L."/>
            <person name="Li Y."/>
            <person name="Griswold A.R."/>
            <person name="Ruan J."/>
            <person name="Sharif H."/>
            <person name="Fontana P."/>
            <person name="Orth-He E.L."/>
            <person name="Fu T.M."/>
            <person name="Bachovchin D.A."/>
            <person name="Wu H."/>
        </authorList>
    </citation>
    <scope>STRUCTURE BY ELECTRON MICROSCOPY (3.90 ANGSTROMS) OF 113-194 IN COMPLEX WITH CASP1</scope>
    <scope>SUBUNIT</scope>
    <scope>INTERACTION WITH CASP1</scope>
</reference>
<dbReference type="EMBL" id="AB023416">
    <property type="protein sequence ID" value="BAA87339.2"/>
    <property type="molecule type" value="mRNA"/>
</dbReference>
<dbReference type="EMBL" id="AF184072">
    <property type="protein sequence ID" value="AAG01187.1"/>
    <property type="molecule type" value="Genomic_DNA"/>
</dbReference>
<dbReference type="EMBL" id="AF184073">
    <property type="protein sequence ID" value="AAG01188.1"/>
    <property type="molecule type" value="mRNA"/>
</dbReference>
<dbReference type="EMBL" id="AF255794">
    <property type="protein sequence ID" value="AAF99665.1"/>
    <property type="molecule type" value="mRNA"/>
</dbReference>
<dbReference type="EMBL" id="AF310103">
    <property type="protein sequence ID" value="AAG30286.1"/>
    <property type="molecule type" value="mRNA"/>
</dbReference>
<dbReference type="EMBL" id="AF384665">
    <property type="protein sequence ID" value="AAK63850.1"/>
    <property type="molecule type" value="mRNA"/>
</dbReference>
<dbReference type="EMBL" id="AK000211">
    <property type="protein sequence ID" value="BAA91012.1"/>
    <property type="status" value="ALT_FRAME"/>
    <property type="molecule type" value="mRNA"/>
</dbReference>
<dbReference type="EMBL" id="BC004470">
    <property type="protein sequence ID" value="AAH04470.1"/>
    <property type="molecule type" value="mRNA"/>
</dbReference>
<dbReference type="EMBL" id="BC013569">
    <property type="protein sequence ID" value="AAH13569.2"/>
    <property type="molecule type" value="mRNA"/>
</dbReference>
<dbReference type="CCDS" id="CCDS10708.1">
    <molecule id="Q9ULZ3-1"/>
</dbReference>
<dbReference type="CCDS" id="CCDS10709.1">
    <molecule id="Q9ULZ3-2"/>
</dbReference>
<dbReference type="RefSeq" id="NP_037390.2">
    <molecule id="Q9ULZ3-1"/>
    <property type="nucleotide sequence ID" value="NM_013258.4"/>
</dbReference>
<dbReference type="RefSeq" id="NP_660183.1">
    <molecule id="Q9ULZ3-2"/>
    <property type="nucleotide sequence ID" value="NM_145182.3"/>
</dbReference>
<dbReference type="PDB" id="1UCP">
    <property type="method" value="NMR"/>
    <property type="chains" value="A=1-91"/>
</dbReference>
<dbReference type="PDB" id="2KN6">
    <property type="method" value="NMR"/>
    <property type="chains" value="A=1-195"/>
</dbReference>
<dbReference type="PDB" id="3J63">
    <property type="method" value="EM"/>
    <property type="resolution" value="3.80 A"/>
    <property type="chains" value="A/B/C/D/E/F/G/H/I/J/K/L/M/N/O=1-91"/>
</dbReference>
<dbReference type="PDB" id="5H8O">
    <property type="method" value="X-ray"/>
    <property type="resolution" value="4.21 A"/>
    <property type="chains" value="B=115-195"/>
</dbReference>
<dbReference type="PDB" id="6K99">
    <property type="method" value="EM"/>
    <property type="resolution" value="4.10 A"/>
    <property type="chains" value="A/B/C/D/E/F/G/H/I/J/K/L=112-194"/>
</dbReference>
<dbReference type="PDB" id="6KI0">
    <property type="method" value="X-ray"/>
    <property type="resolution" value="2.00 A"/>
    <property type="chains" value="A/B=112-195"/>
</dbReference>
<dbReference type="PDB" id="6N1H">
    <property type="method" value="EM"/>
    <property type="resolution" value="3.17 A"/>
    <property type="chains" value="A/B/C/D/E/F/G/H/I/J/K/L/M/N/O/P=112-194"/>
</dbReference>
<dbReference type="PDB" id="7E5B">
    <property type="method" value="X-ray"/>
    <property type="resolution" value="2.29 A"/>
    <property type="chains" value="C/D=1-91"/>
</dbReference>
<dbReference type="PDB" id="7KEU">
    <property type="method" value="EM"/>
    <property type="resolution" value="3.90 A"/>
    <property type="chains" value="A/B/C/D=113-194"/>
</dbReference>
<dbReference type="PDBsum" id="1UCP"/>
<dbReference type="PDBsum" id="2KN6"/>
<dbReference type="PDBsum" id="3J63"/>
<dbReference type="PDBsum" id="5H8O"/>
<dbReference type="PDBsum" id="6K99"/>
<dbReference type="PDBsum" id="6KI0"/>
<dbReference type="PDBsum" id="6N1H"/>
<dbReference type="PDBsum" id="7E5B"/>
<dbReference type="PDBsum" id="7KEU"/>
<dbReference type="BMRB" id="Q9ULZ3"/>
<dbReference type="EMDB" id="EMD-5830"/>
<dbReference type="EMDB" id="EMD-8902"/>
<dbReference type="EMDB" id="EMD-9947"/>
<dbReference type="SMR" id="Q9ULZ3"/>
<dbReference type="BioGRID" id="118876">
    <property type="interactions" value="97"/>
</dbReference>
<dbReference type="ComplexPortal" id="CPX-4082">
    <property type="entry name" value="NLRP1 inflammasome"/>
</dbReference>
<dbReference type="ComplexPortal" id="CPX-4141">
    <property type="entry name" value="NLRP3 inflammasome"/>
</dbReference>
<dbReference type="ComplexPortal" id="CPX-4142">
    <property type="entry name" value="AIM2 inflammasome"/>
</dbReference>
<dbReference type="ComplexPortal" id="CPX-4143">
    <property type="entry name" value="Pyrin inflammasome"/>
</dbReference>
<dbReference type="ComplexPortal" id="CPX-4144">
    <property type="entry name" value="NLRC4 inflammasome"/>
</dbReference>
<dbReference type="CORUM" id="Q9ULZ3"/>
<dbReference type="DIP" id="DIP-27618N"/>
<dbReference type="FunCoup" id="Q9ULZ3">
    <property type="interactions" value="564"/>
</dbReference>
<dbReference type="IntAct" id="Q9ULZ3">
    <property type="interactions" value="71"/>
</dbReference>
<dbReference type="MINT" id="Q9ULZ3"/>
<dbReference type="STRING" id="9606.ENSP00000247470"/>
<dbReference type="iPTMnet" id="Q9ULZ3"/>
<dbReference type="PhosphoSitePlus" id="Q9ULZ3"/>
<dbReference type="BioMuta" id="PYCARD"/>
<dbReference type="DMDM" id="18203507"/>
<dbReference type="jPOST" id="Q9ULZ3"/>
<dbReference type="MassIVE" id="Q9ULZ3"/>
<dbReference type="PaxDb" id="9606-ENSP00000247470"/>
<dbReference type="PeptideAtlas" id="Q9ULZ3"/>
<dbReference type="ProteomicsDB" id="85158">
    <molecule id="Q9ULZ3-1"/>
</dbReference>
<dbReference type="ProteomicsDB" id="85159">
    <molecule id="Q9ULZ3-2"/>
</dbReference>
<dbReference type="ProteomicsDB" id="85160">
    <molecule id="Q9ULZ3-3"/>
</dbReference>
<dbReference type="Pumba" id="Q9ULZ3"/>
<dbReference type="ABCD" id="Q9ULZ3">
    <property type="antibodies" value="1 sequenced antibody"/>
</dbReference>
<dbReference type="Antibodypedia" id="3375">
    <property type="antibodies" value="746 antibodies from 44 providers"/>
</dbReference>
<dbReference type="DNASU" id="29108"/>
<dbReference type="Ensembl" id="ENST00000247470.10">
    <molecule id="Q9ULZ3-1"/>
    <property type="protein sequence ID" value="ENSP00000247470.9"/>
    <property type="gene ID" value="ENSG00000103490.14"/>
</dbReference>
<dbReference type="Ensembl" id="ENST00000350605.4">
    <molecule id="Q9ULZ3-2"/>
    <property type="protein sequence ID" value="ENSP00000340441.4"/>
    <property type="gene ID" value="ENSG00000103490.14"/>
</dbReference>
<dbReference type="GeneID" id="29108"/>
<dbReference type="KEGG" id="hsa:29108"/>
<dbReference type="MANE-Select" id="ENST00000247470.10">
    <property type="protein sequence ID" value="ENSP00000247470.9"/>
    <property type="RefSeq nucleotide sequence ID" value="NM_013258.5"/>
    <property type="RefSeq protein sequence ID" value="NP_037390.2"/>
</dbReference>
<dbReference type="UCSC" id="uc002ebm.4">
    <molecule id="Q9ULZ3-1"/>
    <property type="organism name" value="human"/>
</dbReference>
<dbReference type="AGR" id="HGNC:16608"/>
<dbReference type="CTD" id="29108"/>
<dbReference type="DisGeNET" id="29108"/>
<dbReference type="GeneCards" id="PYCARD"/>
<dbReference type="HGNC" id="HGNC:16608">
    <property type="gene designation" value="PYCARD"/>
</dbReference>
<dbReference type="HPA" id="ENSG00000103490">
    <property type="expression patterns" value="Tissue enhanced (lymphoid tissue, skin)"/>
</dbReference>
<dbReference type="MIM" id="606838">
    <property type="type" value="gene"/>
</dbReference>
<dbReference type="neXtProt" id="NX_Q9ULZ3"/>
<dbReference type="OpenTargets" id="ENSG00000103490"/>
<dbReference type="PharmGKB" id="PA134950175"/>
<dbReference type="VEuPathDB" id="HostDB:ENSG00000103490"/>
<dbReference type="eggNOG" id="ENOG502S3G5">
    <property type="taxonomic scope" value="Eukaryota"/>
</dbReference>
<dbReference type="GeneTree" id="ENSGT00940000161873"/>
<dbReference type="HOGENOM" id="CLU_113553_1_0_1"/>
<dbReference type="InParanoid" id="Q9ULZ3"/>
<dbReference type="OMA" id="SRETNQA"/>
<dbReference type="OrthoDB" id="10058437at2759"/>
<dbReference type="PAN-GO" id="Q9ULZ3">
    <property type="GO annotations" value="3 GO annotations based on evolutionary models"/>
</dbReference>
<dbReference type="PhylomeDB" id="Q9ULZ3"/>
<dbReference type="TreeFam" id="TF337882"/>
<dbReference type="PathwayCommons" id="Q9ULZ3"/>
<dbReference type="Reactome" id="R-HSA-5660668">
    <property type="pathway name" value="CLEC7A/inflammasome pathway"/>
</dbReference>
<dbReference type="Reactome" id="R-HSA-6798695">
    <property type="pathway name" value="Neutrophil degranulation"/>
</dbReference>
<dbReference type="Reactome" id="R-HSA-844456">
    <property type="pathway name" value="The NLRP3 inflammasome"/>
</dbReference>
<dbReference type="Reactome" id="R-HSA-844615">
    <property type="pathway name" value="The AIM2 inflammasome"/>
</dbReference>
<dbReference type="Reactome" id="R-HSA-9660826">
    <property type="pathway name" value="Purinergic signaling in leishmaniasis infection"/>
</dbReference>
<dbReference type="Reactome" id="R-HSA-9692916">
    <property type="pathway name" value="SARS-CoV-1 activates/modulates innate immune responses"/>
</dbReference>
<dbReference type="SignaLink" id="Q9ULZ3"/>
<dbReference type="SIGNOR" id="Q9ULZ3"/>
<dbReference type="BioGRID-ORCS" id="29108">
    <property type="hits" value="13 hits in 1161 CRISPR screens"/>
</dbReference>
<dbReference type="ChiTaRS" id="PYCARD">
    <property type="organism name" value="human"/>
</dbReference>
<dbReference type="EvolutionaryTrace" id="Q9ULZ3"/>
<dbReference type="GeneWiki" id="PYCARD"/>
<dbReference type="GenomeRNAi" id="29108"/>
<dbReference type="Pharos" id="Q9ULZ3">
    <property type="development level" value="Tbio"/>
</dbReference>
<dbReference type="PRO" id="PR:Q9ULZ3"/>
<dbReference type="Proteomes" id="UP000005640">
    <property type="component" value="Chromosome 16"/>
</dbReference>
<dbReference type="RNAct" id="Q9ULZ3">
    <property type="molecule type" value="protein"/>
</dbReference>
<dbReference type="Bgee" id="ENSG00000103490">
    <property type="expression patterns" value="Expressed in monocyte and 163 other cell types or tissues"/>
</dbReference>
<dbReference type="ExpressionAtlas" id="Q9ULZ3">
    <property type="expression patterns" value="baseline and differential"/>
</dbReference>
<dbReference type="GO" id="GO:0097169">
    <property type="term" value="C:AIM2 inflammasome complex"/>
    <property type="evidence" value="ECO:0000314"/>
    <property type="project" value="UniProtKB"/>
</dbReference>
<dbReference type="GO" id="GO:0035578">
    <property type="term" value="C:azurophil granule lumen"/>
    <property type="evidence" value="ECO:0000304"/>
    <property type="project" value="Reactome"/>
</dbReference>
<dbReference type="GO" id="GO:0061702">
    <property type="term" value="C:canonical inflammasome complex"/>
    <property type="evidence" value="ECO:0000353"/>
    <property type="project" value="ComplexPortal"/>
</dbReference>
<dbReference type="GO" id="GO:0005737">
    <property type="term" value="C:cytoplasm"/>
    <property type="evidence" value="ECO:0000314"/>
    <property type="project" value="UniProtKB"/>
</dbReference>
<dbReference type="GO" id="GO:0005829">
    <property type="term" value="C:cytosol"/>
    <property type="evidence" value="ECO:0000314"/>
    <property type="project" value="HPA"/>
</dbReference>
<dbReference type="GO" id="GO:0005783">
    <property type="term" value="C:endoplasmic reticulum"/>
    <property type="evidence" value="ECO:0007669"/>
    <property type="project" value="UniProtKB-SubCell"/>
</dbReference>
<dbReference type="GO" id="GO:0005576">
    <property type="term" value="C:extracellular region"/>
    <property type="evidence" value="ECO:0000304"/>
    <property type="project" value="Reactome"/>
</dbReference>
<dbReference type="GO" id="GO:0000139">
    <property type="term" value="C:Golgi membrane"/>
    <property type="evidence" value="ECO:0000314"/>
    <property type="project" value="UniProtKB"/>
</dbReference>
<dbReference type="GO" id="GO:0008385">
    <property type="term" value="C:IkappaB kinase complex"/>
    <property type="evidence" value="ECO:0000304"/>
    <property type="project" value="HGNC-UCL"/>
</dbReference>
<dbReference type="GO" id="GO:0005874">
    <property type="term" value="C:microtubule"/>
    <property type="evidence" value="ECO:0000303"/>
    <property type="project" value="ComplexPortal"/>
</dbReference>
<dbReference type="GO" id="GO:0005739">
    <property type="term" value="C:mitochondrion"/>
    <property type="evidence" value="ECO:0000314"/>
    <property type="project" value="UniProtKB"/>
</dbReference>
<dbReference type="GO" id="GO:0043025">
    <property type="term" value="C:neuronal cell body"/>
    <property type="evidence" value="ECO:0007669"/>
    <property type="project" value="Ensembl"/>
</dbReference>
<dbReference type="GO" id="GO:0072558">
    <property type="term" value="C:NLRP1 inflammasome complex"/>
    <property type="evidence" value="ECO:0000314"/>
    <property type="project" value="UniProtKB"/>
</dbReference>
<dbReference type="GO" id="GO:0072559">
    <property type="term" value="C:NLRP3 inflammasome complex"/>
    <property type="evidence" value="ECO:0000314"/>
    <property type="project" value="UniProtKB"/>
</dbReference>
<dbReference type="GO" id="GO:0140738">
    <property type="term" value="C:NLRP6 inflammasome complex"/>
    <property type="evidence" value="ECO:0000314"/>
    <property type="project" value="UniProtKB"/>
</dbReference>
<dbReference type="GO" id="GO:0005730">
    <property type="term" value="C:nucleolus"/>
    <property type="evidence" value="ECO:0000314"/>
    <property type="project" value="HPA"/>
</dbReference>
<dbReference type="GO" id="GO:0005654">
    <property type="term" value="C:nucleoplasm"/>
    <property type="evidence" value="ECO:0000314"/>
    <property type="project" value="HPA"/>
</dbReference>
<dbReference type="GO" id="GO:0005634">
    <property type="term" value="C:nucleus"/>
    <property type="evidence" value="ECO:0000250"/>
    <property type="project" value="UniProtKB"/>
</dbReference>
<dbReference type="GO" id="GO:0032991">
    <property type="term" value="C:protein-containing complex"/>
    <property type="evidence" value="ECO:0000314"/>
    <property type="project" value="ARUK-UCL"/>
</dbReference>
<dbReference type="GO" id="GO:0034774">
    <property type="term" value="C:secretory granule lumen"/>
    <property type="evidence" value="ECO:0000304"/>
    <property type="project" value="Reactome"/>
</dbReference>
<dbReference type="GO" id="GO:0070700">
    <property type="term" value="F:BMP receptor binding"/>
    <property type="evidence" value="ECO:0000353"/>
    <property type="project" value="AgBase"/>
</dbReference>
<dbReference type="GO" id="GO:0140608">
    <property type="term" value="F:cysteine-type endopeptidase activator activity"/>
    <property type="evidence" value="ECO:0000318"/>
    <property type="project" value="GO_Central"/>
</dbReference>
<dbReference type="GO" id="GO:0019899">
    <property type="term" value="F:enzyme binding"/>
    <property type="evidence" value="ECO:0000353"/>
    <property type="project" value="AgBase"/>
</dbReference>
<dbReference type="GO" id="GO:0042802">
    <property type="term" value="F:identical protein binding"/>
    <property type="evidence" value="ECO:0000314"/>
    <property type="project" value="UniProtKB"/>
</dbReference>
<dbReference type="GO" id="GO:0005138">
    <property type="term" value="F:interleukin-6 receptor binding"/>
    <property type="evidence" value="ECO:0000353"/>
    <property type="project" value="AgBase"/>
</dbReference>
<dbReference type="GO" id="GO:0017024">
    <property type="term" value="F:myosin I binding"/>
    <property type="evidence" value="ECO:0000353"/>
    <property type="project" value="AgBase"/>
</dbReference>
<dbReference type="GO" id="GO:0038187">
    <property type="term" value="F:pattern recognition receptor activity"/>
    <property type="evidence" value="ECO:0000318"/>
    <property type="project" value="GO_Central"/>
</dbReference>
<dbReference type="GO" id="GO:0002020">
    <property type="term" value="F:protease binding"/>
    <property type="evidence" value="ECO:0000353"/>
    <property type="project" value="AgBase"/>
</dbReference>
<dbReference type="GO" id="GO:0046983">
    <property type="term" value="F:protein dimerization activity"/>
    <property type="evidence" value="ECO:0000314"/>
    <property type="project" value="UniProtKB"/>
</dbReference>
<dbReference type="GO" id="GO:0042803">
    <property type="term" value="F:protein homodimerization activity"/>
    <property type="evidence" value="ECO:0000314"/>
    <property type="project" value="HGNC-UCL"/>
</dbReference>
<dbReference type="GO" id="GO:0032090">
    <property type="term" value="F:Pyrin domain binding"/>
    <property type="evidence" value="ECO:0000353"/>
    <property type="project" value="HGNC-UCL"/>
</dbReference>
<dbReference type="GO" id="GO:0044325">
    <property type="term" value="F:transmembrane transporter binding"/>
    <property type="evidence" value="ECO:0007669"/>
    <property type="project" value="Ensembl"/>
</dbReference>
<dbReference type="GO" id="GO:0005523">
    <property type="term" value="F:tropomyosin binding"/>
    <property type="evidence" value="ECO:0000353"/>
    <property type="project" value="AgBase"/>
</dbReference>
<dbReference type="GO" id="GO:0002218">
    <property type="term" value="P:activation of innate immune response"/>
    <property type="evidence" value="ECO:0000318"/>
    <property type="project" value="GO_Central"/>
</dbReference>
<dbReference type="GO" id="GO:0006915">
    <property type="term" value="P:apoptotic process"/>
    <property type="evidence" value="ECO:0000304"/>
    <property type="project" value="ProtInc"/>
</dbReference>
<dbReference type="GO" id="GO:0097190">
    <property type="term" value="P:apoptotic signaling pathway"/>
    <property type="evidence" value="ECO:0000315"/>
    <property type="project" value="ARUK-UCL"/>
</dbReference>
<dbReference type="GO" id="GO:0071347">
    <property type="term" value="P:cellular response to interleukin-1"/>
    <property type="evidence" value="ECO:0000314"/>
    <property type="project" value="UniProtKB"/>
</dbReference>
<dbReference type="GO" id="GO:0071222">
    <property type="term" value="P:cellular response to lipopolysaccharide"/>
    <property type="evidence" value="ECO:0000314"/>
    <property type="project" value="UniProtKB"/>
</dbReference>
<dbReference type="GO" id="GO:0071356">
    <property type="term" value="P:cellular response to tumor necrosis factor"/>
    <property type="evidence" value="ECO:0000314"/>
    <property type="project" value="UniProtKB"/>
</dbReference>
<dbReference type="GO" id="GO:0050829">
    <property type="term" value="P:defense response to Gram-negative bacterium"/>
    <property type="evidence" value="ECO:0000315"/>
    <property type="project" value="UniProtKB"/>
</dbReference>
<dbReference type="GO" id="GO:0050830">
    <property type="term" value="P:defense response to Gram-positive bacterium"/>
    <property type="evidence" value="ECO:0007669"/>
    <property type="project" value="Ensembl"/>
</dbReference>
<dbReference type="GO" id="GO:0051607">
    <property type="term" value="P:defense response to virus"/>
    <property type="evidence" value="ECO:0000314"/>
    <property type="project" value="UniProtKB"/>
</dbReference>
<dbReference type="GO" id="GO:0046456">
    <property type="term" value="P:icosanoid biosynthetic process"/>
    <property type="evidence" value="ECO:0000303"/>
    <property type="project" value="ComplexPortal"/>
</dbReference>
<dbReference type="GO" id="GO:0006954">
    <property type="term" value="P:inflammatory response"/>
    <property type="evidence" value="ECO:0000318"/>
    <property type="project" value="GO_Central"/>
</dbReference>
<dbReference type="GO" id="GO:0045087">
    <property type="term" value="P:innate immune response"/>
    <property type="evidence" value="ECO:0007669"/>
    <property type="project" value="UniProtKB-KW"/>
</dbReference>
<dbReference type="GO" id="GO:0097193">
    <property type="term" value="P:intrinsic apoptotic signaling pathway"/>
    <property type="evidence" value="ECO:0000318"/>
    <property type="project" value="GO_Central"/>
</dbReference>
<dbReference type="GO" id="GO:0072332">
    <property type="term" value="P:intrinsic apoptotic signaling pathway by p53 class mediator"/>
    <property type="evidence" value="ECO:0000315"/>
    <property type="project" value="UniProtKB"/>
</dbReference>
<dbReference type="GO" id="GO:0042771">
    <property type="term" value="P:intrinsic apoptotic signaling pathway in response to DNA damage by p53 class mediator"/>
    <property type="evidence" value="ECO:0000315"/>
    <property type="project" value="UniProtKB"/>
</dbReference>
<dbReference type="GO" id="GO:0044351">
    <property type="term" value="P:macropinocytosis"/>
    <property type="evidence" value="ECO:0000250"/>
    <property type="project" value="UniProtKB"/>
</dbReference>
<dbReference type="GO" id="GO:0001773">
    <property type="term" value="P:myeloid dendritic cell activation"/>
    <property type="evidence" value="ECO:0000315"/>
    <property type="project" value="UniProtKB"/>
</dbReference>
<dbReference type="GO" id="GO:0002277">
    <property type="term" value="P:myeloid dendritic cell activation involved in immune response"/>
    <property type="evidence" value="ECO:0000250"/>
    <property type="project" value="UniProtKB"/>
</dbReference>
<dbReference type="GO" id="GO:0043124">
    <property type="term" value="P:negative regulation of canonical NF-kappaB signal transduction"/>
    <property type="evidence" value="ECO:0000314"/>
    <property type="project" value="UniProtKB"/>
</dbReference>
<dbReference type="GO" id="GO:1900016">
    <property type="term" value="P:negative regulation of cytokine production involved in inflammatory response"/>
    <property type="evidence" value="ECO:0000315"/>
    <property type="project" value="UniProtKB"/>
</dbReference>
<dbReference type="GO" id="GO:0032688">
    <property type="term" value="P:negative regulation of interferon-beta production"/>
    <property type="evidence" value="ECO:0000315"/>
    <property type="project" value="UniProtKB"/>
</dbReference>
<dbReference type="GO" id="GO:0032088">
    <property type="term" value="P:negative regulation of NF-kappaB transcription factor activity"/>
    <property type="evidence" value="ECO:0000315"/>
    <property type="project" value="UniProtKB"/>
</dbReference>
<dbReference type="GO" id="GO:0071901">
    <property type="term" value="P:negative regulation of protein serine/threonine kinase activity"/>
    <property type="evidence" value="ECO:0000314"/>
    <property type="project" value="UniProtKB"/>
</dbReference>
<dbReference type="GO" id="GO:0044546">
    <property type="term" value="P:NLRP3 inflammasome complex assembly"/>
    <property type="evidence" value="ECO:0000314"/>
    <property type="project" value="UniProtKB"/>
</dbReference>
<dbReference type="GO" id="GO:0007231">
    <property type="term" value="P:osmosensory signaling pathway"/>
    <property type="evidence" value="ECO:0000303"/>
    <property type="project" value="ComplexPortal"/>
</dbReference>
<dbReference type="GO" id="GO:0002221">
    <property type="term" value="P:pattern recognition receptor signaling pathway"/>
    <property type="evidence" value="ECO:0000303"/>
    <property type="project" value="ComplexPortal"/>
</dbReference>
<dbReference type="GO" id="GO:0030838">
    <property type="term" value="P:positive regulation of actin filament polymerization"/>
    <property type="evidence" value="ECO:0000250"/>
    <property type="project" value="UniProtKB"/>
</dbReference>
<dbReference type="GO" id="GO:0042104">
    <property type="term" value="P:positive regulation of activated T cell proliferation"/>
    <property type="evidence" value="ECO:0000250"/>
    <property type="project" value="UniProtKB"/>
</dbReference>
<dbReference type="GO" id="GO:0002821">
    <property type="term" value="P:positive regulation of adaptive immune response"/>
    <property type="evidence" value="ECO:0000315"/>
    <property type="project" value="UniProtKB"/>
</dbReference>
<dbReference type="GO" id="GO:0002588">
    <property type="term" value="P:positive regulation of antigen processing and presentation of peptide antigen via MHC class II"/>
    <property type="evidence" value="ECO:0000250"/>
    <property type="project" value="UniProtKB"/>
</dbReference>
<dbReference type="GO" id="GO:0043065">
    <property type="term" value="P:positive regulation of apoptotic process"/>
    <property type="evidence" value="ECO:0000314"/>
    <property type="project" value="UniProtKB"/>
</dbReference>
<dbReference type="GO" id="GO:0043123">
    <property type="term" value="P:positive regulation of canonical NF-kappaB signal transduction"/>
    <property type="evidence" value="ECO:0000314"/>
    <property type="project" value="HGNC-UCL"/>
</dbReference>
<dbReference type="GO" id="GO:0032722">
    <property type="term" value="P:positive regulation of chemokine production"/>
    <property type="evidence" value="ECO:0000315"/>
    <property type="project" value="UniProtKB"/>
</dbReference>
<dbReference type="GO" id="GO:0002230">
    <property type="term" value="P:positive regulation of defense response to virus by host"/>
    <property type="evidence" value="ECO:0007669"/>
    <property type="project" value="Ensembl"/>
</dbReference>
<dbReference type="GO" id="GO:0051091">
    <property type="term" value="P:positive regulation of DNA-binding transcription factor activity"/>
    <property type="evidence" value="ECO:0000314"/>
    <property type="project" value="UniProtKB"/>
</dbReference>
<dbReference type="GO" id="GO:0070374">
    <property type="term" value="P:positive regulation of ERK1 and ERK2 cascade"/>
    <property type="evidence" value="ECO:0000315"/>
    <property type="project" value="UniProtKB"/>
</dbReference>
<dbReference type="GO" id="GO:2001238">
    <property type="term" value="P:positive regulation of extrinsic apoptotic signaling pathway"/>
    <property type="evidence" value="ECO:0000314"/>
    <property type="project" value="UniProtKB"/>
</dbReference>
<dbReference type="GO" id="GO:0050729">
    <property type="term" value="P:positive regulation of inflammatory response"/>
    <property type="evidence" value="ECO:0000314"/>
    <property type="project" value="ComplexPortal"/>
</dbReference>
<dbReference type="GO" id="GO:0032731">
    <property type="term" value="P:positive regulation of interleukin-1 beta production"/>
    <property type="evidence" value="ECO:0000314"/>
    <property type="project" value="HGNC-UCL"/>
</dbReference>
<dbReference type="GO" id="GO:0032733">
    <property type="term" value="P:positive regulation of interleukin-10 production"/>
    <property type="evidence" value="ECO:0000315"/>
    <property type="project" value="UniProtKB"/>
</dbReference>
<dbReference type="GO" id="GO:0032755">
    <property type="term" value="P:positive regulation of interleukin-6 production"/>
    <property type="evidence" value="ECO:0000315"/>
    <property type="project" value="UniProtKB"/>
</dbReference>
<dbReference type="GO" id="GO:0032757">
    <property type="term" value="P:positive regulation of interleukin-8 production"/>
    <property type="evidence" value="ECO:0000315"/>
    <property type="project" value="UniProtKB"/>
</dbReference>
<dbReference type="GO" id="GO:0046330">
    <property type="term" value="P:positive regulation of JNK cascade"/>
    <property type="evidence" value="ECO:0000315"/>
    <property type="project" value="UniProtKB"/>
</dbReference>
<dbReference type="GO" id="GO:0060907">
    <property type="term" value="P:positive regulation of macrophage cytokine production"/>
    <property type="evidence" value="ECO:0007669"/>
    <property type="project" value="Ensembl"/>
</dbReference>
<dbReference type="GO" id="GO:0051092">
    <property type="term" value="P:positive regulation of NF-kappaB transcription factor activity"/>
    <property type="evidence" value="ECO:0000314"/>
    <property type="project" value="UniProtKB"/>
</dbReference>
<dbReference type="GO" id="GO:1901224">
    <property type="term" value="P:positive regulation of non-canonical NF-kappaB signal transduction"/>
    <property type="evidence" value="ECO:0000353"/>
    <property type="project" value="UniProtKB"/>
</dbReference>
<dbReference type="GO" id="GO:0050766">
    <property type="term" value="P:positive regulation of phagocytosis"/>
    <property type="evidence" value="ECO:0000250"/>
    <property type="project" value="UniProtKB"/>
</dbReference>
<dbReference type="GO" id="GO:0090200">
    <property type="term" value="P:positive regulation of release of cytochrome c from mitochondria"/>
    <property type="evidence" value="ECO:0000314"/>
    <property type="project" value="UniProtKB"/>
</dbReference>
<dbReference type="GO" id="GO:0050870">
    <property type="term" value="P:positive regulation of T cell activation"/>
    <property type="evidence" value="ECO:0000315"/>
    <property type="project" value="UniProtKB"/>
</dbReference>
<dbReference type="GO" id="GO:2000406">
    <property type="term" value="P:positive regulation of T cell migration"/>
    <property type="evidence" value="ECO:0000250"/>
    <property type="project" value="UniProtKB"/>
</dbReference>
<dbReference type="GO" id="GO:0032760">
    <property type="term" value="P:positive regulation of tumor necrosis factor production"/>
    <property type="evidence" value="ECO:0000315"/>
    <property type="project" value="UniProtKB"/>
</dbReference>
<dbReference type="GO" id="GO:0032729">
    <property type="term" value="P:positive regulation of type II interferon production"/>
    <property type="evidence" value="ECO:0000250"/>
    <property type="project" value="UniProtKB"/>
</dbReference>
<dbReference type="GO" id="GO:0051260">
    <property type="term" value="P:protein homooligomerization"/>
    <property type="evidence" value="ECO:0000314"/>
    <property type="project" value="UniProtKB"/>
</dbReference>
<dbReference type="GO" id="GO:0070269">
    <property type="term" value="P:pyroptotic inflammatory response"/>
    <property type="evidence" value="ECO:0000303"/>
    <property type="project" value="ComplexPortal"/>
</dbReference>
<dbReference type="GO" id="GO:0010506">
    <property type="term" value="P:regulation of autophagy"/>
    <property type="evidence" value="ECO:0007669"/>
    <property type="project" value="Ensembl"/>
</dbReference>
<dbReference type="GO" id="GO:0050727">
    <property type="term" value="P:regulation of inflammatory response"/>
    <property type="evidence" value="ECO:0000314"/>
    <property type="project" value="UniProtKB"/>
</dbReference>
<dbReference type="GO" id="GO:2001242">
    <property type="term" value="P:regulation of intrinsic apoptotic signaling pathway"/>
    <property type="evidence" value="ECO:0000314"/>
    <property type="project" value="UniProtKB"/>
</dbReference>
<dbReference type="GO" id="GO:0031647">
    <property type="term" value="P:regulation of protein stability"/>
    <property type="evidence" value="ECO:0000250"/>
    <property type="project" value="UniProtKB"/>
</dbReference>
<dbReference type="GO" id="GO:0010803">
    <property type="term" value="P:regulation of tumor necrosis factor-mediated signaling pathway"/>
    <property type="evidence" value="ECO:0000315"/>
    <property type="project" value="UniProtKB"/>
</dbReference>
<dbReference type="GO" id="GO:0007165">
    <property type="term" value="P:signal transduction"/>
    <property type="evidence" value="ECO:0000303"/>
    <property type="project" value="UniProtKB"/>
</dbReference>
<dbReference type="GO" id="GO:0033209">
    <property type="term" value="P:tumor necrosis factor-mediated signaling pathway"/>
    <property type="evidence" value="ECO:0000314"/>
    <property type="project" value="HGNC-UCL"/>
</dbReference>
<dbReference type="CDD" id="cd08330">
    <property type="entry name" value="CARD_ASC_NALP1"/>
    <property type="match status" value="1"/>
</dbReference>
<dbReference type="CDD" id="cd08321">
    <property type="entry name" value="Pyrin_ASC-like"/>
    <property type="match status" value="1"/>
</dbReference>
<dbReference type="FunFam" id="1.10.533.10:FF:000013">
    <property type="entry name" value="Apoptosis-associated speck-like protein containing a CARD"/>
    <property type="match status" value="1"/>
</dbReference>
<dbReference type="FunFam" id="1.10.533.10:FF:000053">
    <property type="entry name" value="Apoptosis-associated speck-like protein containing a CARD"/>
    <property type="match status" value="1"/>
</dbReference>
<dbReference type="Gene3D" id="1.10.533.10">
    <property type="entry name" value="Death Domain, Fas"/>
    <property type="match status" value="2"/>
</dbReference>
<dbReference type="InterPro" id="IPR001315">
    <property type="entry name" value="CARD"/>
</dbReference>
<dbReference type="InterPro" id="IPR033516">
    <property type="entry name" value="CARD8/ASC/NALP1_CARD"/>
</dbReference>
<dbReference type="InterPro" id="IPR004020">
    <property type="entry name" value="DAPIN"/>
</dbReference>
<dbReference type="InterPro" id="IPR011029">
    <property type="entry name" value="DEATH-like_dom_sf"/>
</dbReference>
<dbReference type="InterPro" id="IPR051249">
    <property type="entry name" value="NLRP_Inflammasome"/>
</dbReference>
<dbReference type="PANTHER" id="PTHR46985:SF2">
    <property type="entry name" value="APOPTOSIS-ASSOCIATED SPECK-LIKE PROTEIN CONTAINING A CARD"/>
    <property type="match status" value="1"/>
</dbReference>
<dbReference type="PANTHER" id="PTHR46985">
    <property type="entry name" value="NACHT, LRR AND PYD DOMAINS-CONTAINING PROTEIN 1"/>
    <property type="match status" value="1"/>
</dbReference>
<dbReference type="Pfam" id="PF00619">
    <property type="entry name" value="CARD"/>
    <property type="match status" value="1"/>
</dbReference>
<dbReference type="Pfam" id="PF02758">
    <property type="entry name" value="PYRIN"/>
    <property type="match status" value="1"/>
</dbReference>
<dbReference type="SMART" id="SM01289">
    <property type="entry name" value="PYRIN"/>
    <property type="match status" value="1"/>
</dbReference>
<dbReference type="SUPFAM" id="SSF47986">
    <property type="entry name" value="DEATH domain"/>
    <property type="match status" value="2"/>
</dbReference>
<dbReference type="PROSITE" id="PS50209">
    <property type="entry name" value="CARD"/>
    <property type="match status" value="1"/>
</dbReference>
<dbReference type="PROSITE" id="PS50824">
    <property type="entry name" value="DAPIN"/>
    <property type="match status" value="1"/>
</dbReference>
<sequence length="195" mass="21627">MGRARDAILDALENLTAEELKKFKLKLLSVPLREGYGRIPRGALLSMDALDLTDKLVSFYLETYGAELTANVLRDMGLQEMAGQLQAATHQGSGAAPAGIQAPPQSAAKPGLHFIDQHRAALIARVTNVEWLLDALYGKVLTDEQYQAVRAEPTNPSKMRKLFSFTPAWNWTCKDLLLQALRESQSYLVEDLERS</sequence>
<comment type="function">
    <text evidence="4 10 11 13 15 17 21 22 23 26 27 29 30 31 32 34 37 39 41 43 44 47 48 49 52 54 55 57">Functions as a key mediator in apoptosis and inflammation (PubMed:11103777, PubMed:12646168, PubMed:15030775, PubMed:17349957, PubMed:17599095, PubMed:19158675, PubMed:19158676, PubMed:19234215, PubMed:19494289, PubMed:21487011, PubMed:24630722, PubMed:25847972, PubMed:30674671, PubMed:34678144, PubMed:36050480). Promotes caspase-mediated apoptosis involving predominantly caspase-8 and also caspase-9 in a probable cell type-specific manner (PubMed:11103777, PubMed:12646168). Involved in activation of the mitochondrial apoptotic pathway, promotes caspase-8-dependent proteolytic maturation of BID independently of FADD in certain cell types and also mediates mitochondrial translocation of BAX and activates BAX-dependent apoptosis coupled to activation of caspase-9, -2 and -3 (PubMed:14730312, PubMed:16964285). Involved in innate immune response by acting as an integral adapter in the assembly of various inflammasomes (NLRP1, NLRP2, NLRP3, NLRP6, AIM2 and probably IFI16) which recruit and activate caspase-1 leading to processing and secretion of pro-inflammatory cytokines (PubMed:15030775, PubMed:16982856, PubMed:17349957, PubMed:17599095, PubMed:19158675, PubMed:19158676, PubMed:19234215, PubMed:21487011, PubMed:23530044, PubMed:24630722, PubMed:25847972, PubMed:29440442, PubMed:30674671, PubMed:33980849, PubMed:34678144, PubMed:34706239). Caspase-1-dependent inflammation leads to macrophage pyroptosis, a form of cell death (PubMed:24630722). The function as activating adapter in different types of inflammasomes is mediated by the pyrin and CARD domains and their homotypic interactions (PubMed:14499617, PubMed:19234215, PubMed:24630722). Clustered PYCARD nucleates the formation of caspase-1 filaments through the interaction of their respective CARD domains, acting as a platform for of caspase-1 polymerization (PubMed:24630722). In the NLRP1 and NLRC4 inflammasomes seems not be required but facilitates the processing of procaspase-1 (PubMed:17349957). In cooperation with NOD2 involved in an inflammasome activated by bacterial muramyl dipeptide leading to caspase-1 activation (PubMed:16964285). May be involved in RIGI-triggered pro-inflammatory responses and inflammasome activation (PubMed:19915568). In collaboration with AIM2 which detects cytosolic double-stranded DNA may also be involved in a caspase-1-independent cell death that involves caspase-8 (PubMed:19158675, PubMed:19158676). In adaptive immunity may be involved in maturation of dendritic cells to stimulate T-cell immunity and in cytoskeletal rearrangements coupled to chemotaxis and antigen uptake may be involved in post-transcriptional regulation of the guanine nucleotide exchange factor DOCK2; the latter function is proposed to involve the nuclear form (PubMed:22732093). Also involved in transcriptional activation of cytokines and chemokines independent of the inflammasome; this function may involve AP-1, NF-kappa-B, MAPK and caspase-8 signaling pathways (PubMed:12486103, PubMed:16585594). For regulation of NF-kappa-B activating and inhibiting functions have been reported (PubMed:12486103). Modulates NF-kappa-B induction at the level of the IKK complex by inhibiting kinase activity of CHUK and IKBK (PubMed:12486103, PubMed:16585594). Proposed to compete with RIPK2 for association with CASP1 thereby down-regulating CASP1-mediated RIPK2-dependent NF-kappa-B activation and activating interleukin-1 beta processing (PubMed:16585594). Modulates host resistance to DNA virus infection, probably by inducing the cleavage of and inactivating CGAS in presence of cytoplasmic double-stranded DNA (PubMed:28314590).</text>
</comment>
<comment type="function">
    <molecule>Isoform 2</molecule>
    <text evidence="33 35">May have a regulating effect on the function as inflammasome adapter.</text>
</comment>
<comment type="function">
    <molecule>Isoform 3</molecule>
    <text evidence="35">Seems to inhibit inflammasome-mediated maturation of interleukin-1 beta.</text>
</comment>
<comment type="subunit">
    <text evidence="1 5 6 7 8 9 10 11 12 14 15 16 17 18 19 20 21 24 25 27 28 29 30 34 38 41 45 48 49 50 51 52 53 54 55 56">Self-associates; enforced oligomerization induces apoptosis, NF-kappa-B regulation and interleukin-1 beta secretion (PubMed:15641782, PubMed:17599095, PubMed:33420028, PubMed:33420033, PubMed:34706239). Homooligomers can form disk-like particles of approximately 12 nm diameter and approximately 1 nm height (PubMed:15641782, PubMed:17599095). Next to isoform 1, also isoform 2 and isoform 3 may be involved in oligomerization leading to functional regulation (Probable). Component of several inflammasomes containing one pattern recognition receptor/sensor, such as NLRP1, NLRP2, NLRP3, NLRP6, NLRC4, AIM2, MEFV or NOD2, and probably NLRC4, NLRP12 or IFI16 (PubMed:11374873, PubMed:12191486, PubMed:15030775, PubMed:15456791, PubMed:19158676, PubMed:23530044, PubMed:27432880, PubMed:29440442, PubMed:30674671, PubMed:33980849, PubMed:34678144, PubMed:35559676). Major component of the ASC pyroptosome, a 1-2 um supramolecular assembly (one per macrophage cell) which consists of oligomerized PYCARD dimers and CASP1 (PubMed:17599095). Interacts with CASP1 (precursor form); the interaction induces activation of CASP1 leading to the processing of interleukin-1 beta; PYCARD competes with RIPK2 for binding to CASP1 (PubMed:11967258, PubMed:14634131, PubMed:16585594, PubMed:17599095, PubMed:33420033). Interacts with NLRP3; the interaction requires the homooligomerization of NLRP3 (PubMed:11786556, PubMed:15020601, PubMed:15030775, PubMed:34341353, PubMed:35559676). Interacts with NLRP2, NLRC4, MEFV, CARD16, AIM2, IFI16, NOD2, RIGI, RIPK2, PYDC1, PYDC2, NLRP10, CASP8, CHUK, IKBKB and BAX (PubMed:11374873, PubMed:11498534, PubMed:12486103, PubMed:12646168, PubMed:12656673, PubMed:14730312, PubMed:15096476, PubMed:15456791, PubMed:17178784, PubMed:17339483, PubMed:18362139, PubMed:19158675, PubMed:19158676, PubMed:19915568, PubMed:21575908, PubMed:23530044, PubMed:29440442, PubMed:33980849). Component of the AIM2 PANoptosome complex, a multiprotein complex that drives inflammatory cell death (PANoptosis) (By similarity).</text>
</comment>
<comment type="interaction">
    <interactant intactId="EBI-751215">
        <id>Q9ULZ3</id>
    </interactant>
    <interactant intactId="EBI-6253193">
        <id>O14862</id>
        <label>AIM2</label>
    </interactant>
    <organismsDiffer>false</organismsDiffer>
    <experiments>13</experiments>
</comment>
<comment type="interaction">
    <interactant intactId="EBI-751215">
        <id>Q9ULZ3</id>
    </interactant>
    <interactant intactId="EBI-516580">
        <id>Q07812</id>
        <label>BAX</label>
    </interactant>
    <organismsDiffer>false</organismsDiffer>
    <experiments>7</experiments>
</comment>
<comment type="interaction">
    <interactant intactId="EBI-751215">
        <id>Q9ULZ3</id>
    </interactant>
    <interactant intactId="EBI-516667">
        <id>P29466</id>
        <label>CASP1</label>
    </interactant>
    <organismsDiffer>false</organismsDiffer>
    <experiments>11</experiments>
</comment>
<comment type="interaction">
    <interactant intactId="EBI-751215">
        <id>Q9ULZ3</id>
    </interactant>
    <interactant intactId="EBI-949824">
        <id>O00471</id>
        <label>EXOC5</label>
    </interactant>
    <organismsDiffer>false</organismsDiffer>
    <experiments>5</experiments>
</comment>
<comment type="interaction">
    <interactant intactId="EBI-751215">
        <id>Q9ULZ3</id>
    </interactant>
    <interactant intactId="EBI-7644532">
        <id>O15553</id>
        <label>MEFV</label>
    </interactant>
    <organismsDiffer>false</organismsDiffer>
    <experiments>8</experiments>
</comment>
<comment type="interaction">
    <interactant intactId="EBI-751215">
        <id>Q9ULZ3</id>
    </interactant>
    <interactant intactId="EBI-1042625">
        <id>Q7RTR2</id>
        <label>NLRC3</label>
    </interactant>
    <organismsDiffer>false</organismsDiffer>
    <experiments>3</experiments>
</comment>
<comment type="interaction">
    <interactant intactId="EBI-751215">
        <id>Q9ULZ3</id>
    </interactant>
    <interactant intactId="EBI-1220518">
        <id>Q9C000</id>
        <label>NLRP1</label>
    </interactant>
    <organismsDiffer>false</organismsDiffer>
    <experiments>5</experiments>
</comment>
<comment type="interaction">
    <interactant intactId="EBI-751215">
        <id>Q9ULZ3</id>
    </interactant>
    <interactant intactId="EBI-6253230">
        <id>Q96P20</id>
        <label>NLRP3</label>
    </interactant>
    <organismsDiffer>false</organismsDiffer>
    <experiments>27</experiments>
</comment>
<comment type="interaction">
    <interactant intactId="EBI-751215">
        <id>Q9ULZ3</id>
    </interactant>
    <interactant intactId="EBI-751215">
        <id>Q9ULZ3</id>
        <label>PYCARD</label>
    </interactant>
    <organismsDiffer>false</organismsDiffer>
    <experiments>8</experiments>
</comment>
<comment type="interaction">
    <interactant intactId="EBI-751215">
        <id>Q9ULZ3</id>
    </interactant>
    <interactant intactId="EBI-6374418">
        <id>Q56P42</id>
        <label>PYDC2</label>
    </interactant>
    <organismsDiffer>false</organismsDiffer>
    <experiments>4</experiments>
</comment>
<comment type="interaction">
    <interactant intactId="EBI-751215">
        <id>Q9ULZ3</id>
    </interactant>
    <interactant intactId="EBI-358507">
        <id>Q13546</id>
        <label>RIPK1</label>
    </interactant>
    <organismsDiffer>false</organismsDiffer>
    <experiments>2</experiments>
</comment>
<comment type="interaction">
    <interactant intactId="EBI-751215">
        <id>Q9ULZ3</id>
    </interactant>
    <interactant intactId="EBI-78302">
        <id>P43405</id>
        <label>SYK</label>
    </interactant>
    <organismsDiffer>false</organismsDiffer>
    <experiments>4</experiments>
</comment>
<comment type="subcellular location">
    <subcellularLocation>
        <location evidence="4 17 31 44">Cytoplasm</location>
    </subcellularLocation>
    <subcellularLocation>
        <location evidence="9 17 49 54">Inflammasome</location>
    </subcellularLocation>
    <subcellularLocation>
        <location evidence="36">Endoplasmic reticulum</location>
    </subcellularLocation>
    <subcellularLocation>
        <location evidence="15 36">Mitochondrion</location>
    </subcellularLocation>
    <subcellularLocation>
        <location evidence="31 44">Nucleus</location>
    </subcellularLocation>
    <text evidence="1 4 9 17 31">Upstream of caspase activation, a redistribution from the cytoplasm to the aggregates occurs. These appear as hollow, perinuclear spherical, ball-like structures (PubMed:11103777, PubMed:12191486, PubMed:15030775). Upon NLRP3 inflammasome activation redistributes to the perinuclear space localizing to endoplasmic reticulum and mitochondria (PubMed:12191486, PubMed:15030775). Localized primarily to the nucleus in resting monocytes/macrophages and rapidly redistributed to the cytoplasm upon pathogen infection (PubMed:19234215). Localized to large cytoplasmic aggregate appearing as a speck containing AIM2, PYCARD, CASP8 and bacterial DNA after infection with Francisella tularensis (By similarity).</text>
</comment>
<comment type="subcellular location">
    <subcellularLocation>
        <location evidence="40">Golgi apparatus membrane</location>
    </subcellularLocation>
    <text evidence="40">(Microbial infection) Upon HRSV infection, the protein is mainly located in lipid rafts in the Golgi membrane.</text>
</comment>
<comment type="alternative products">
    <event type="alternative splicing"/>
    <isoform>
        <id>Q9ULZ3-1</id>
        <name>1</name>
        <name>fASC</name>
        <sequence type="displayed"/>
    </isoform>
    <isoform>
        <id>Q9ULZ3-2</id>
        <name>2</name>
        <name>Asc-b</name>
        <name>vASC</name>
        <sequence type="described" ref="VSP_004119"/>
    </isoform>
    <isoform>
        <id>Q9ULZ3-3</id>
        <name>3</name>
        <name>Asc-c</name>
        <sequence type="described" ref="VSP_004118"/>
    </isoform>
</comment>
<comment type="tissue specificity">
    <text evidence="40">Widely expressed at low levels. Detected in peripheral blood leukocytes, lung, small intestine, spleen, thymus, colon and at lower levels in placenta, liver and kidney. Very low expression in skeletal muscle, heart and brain. Expressed in lung epithelial cells (at protein level) (PubMed:23229815). Detected in the leukemia cell lines HL-60 and U-937, but not in Jurkat T-cell lymphoma and Daudi Burkitt's lymphoma. Detected in the melanoma cell line WM35, but not in WM793. Not detected in HeLa cervical carcinoma cells and MOLT-4 lymphocytic leukemia cells.</text>
</comment>
<comment type="induction">
    <text evidence="42">In macrophages, up-regulated by endocannabinoid anandamide/AEA.</text>
</comment>
<comment type="domain">
    <text evidence="7">The CARD domain mediates interaction with CASP1 and NLRC4 (PubMed:11967258, PubMed:14634131).</text>
</comment>
<comment type="domain">
    <text evidence="7 12 13 24 29 30">The pyrin domain mediates homotypic interactions with pyrin domains of proteins such as of NLRP3, PYDC1, PYDC2 and AIM2.</text>
</comment>
<comment type="PTM">
    <text evidence="12">Phosphorylated.</text>
</comment>
<comment type="PTM">
    <text evidence="44 46 57">'Lys-63'-linked polyubiquitination by TRAF3 is critical for speck formation and inflammasome activation (PubMed:25847972). 'Lys-63'-linked deubiquitinated by USP50; a crucial step for NLRP3-mediated inflammasome activation (PubMed:28094437). 'Lys-63'-linked polyubiquitination by PELI1 is also critical for speck formation and inflammasome activation (PubMed:34706239). Deubiquitinated by USP3 that cleaves 'Lys-48'-linked ubiquitin chains and strengthens its stability by blocking proteasomal degradation (PubMed:36050480).</text>
</comment>
<comment type="miscellaneous">
    <text>In breast tumorigenesis, methylation-mediated silencing may affect genes and proteins that act as positive mediators of cell death.</text>
</comment>
<comment type="sequence caution" evidence="64">
    <conflict type="frameshift">
        <sequence resource="EMBL-CDS" id="BAA91012"/>
    </conflict>
</comment>
<keyword id="KW-0002">3D-structure</keyword>
<keyword id="KW-0025">Alternative splicing</keyword>
<keyword id="KW-0053">Apoptosis</keyword>
<keyword id="KW-0963">Cytoplasm</keyword>
<keyword id="KW-0256">Endoplasmic reticulum</keyword>
<keyword id="KW-0333">Golgi apparatus</keyword>
<keyword id="KW-0391">Immunity</keyword>
<keyword id="KW-1271">Inflammasome</keyword>
<keyword id="KW-0395">Inflammatory response</keyword>
<keyword id="KW-0399">Innate immunity</keyword>
<keyword id="KW-1017">Isopeptide bond</keyword>
<keyword id="KW-0472">Membrane</keyword>
<keyword id="KW-0496">Mitochondrion</keyword>
<keyword id="KW-0539">Nucleus</keyword>
<keyword id="KW-0597">Phosphoprotein</keyword>
<keyword id="KW-1267">Proteomics identification</keyword>
<keyword id="KW-1185">Reference proteome</keyword>
<keyword id="KW-0043">Tumor suppressor</keyword>
<keyword id="KW-0832">Ubl conjugation</keyword>
<feature type="chain" id="PRO_0000064692" description="Apoptosis-associated speck-like protein containing a CARD">
    <location>
        <begin position="1"/>
        <end position="195"/>
    </location>
</feature>
<feature type="domain" description="Pyrin" evidence="3">
    <location>
        <begin position="1"/>
        <end position="91"/>
    </location>
</feature>
<feature type="domain" description="CARD" evidence="2">
    <location>
        <begin position="107"/>
        <end position="195"/>
    </location>
</feature>
<feature type="modified residue" description="Phosphoserine" evidence="1">
    <location>
        <position position="195"/>
    </location>
</feature>
<feature type="cross-link" description="Glycyl lysine isopeptide (Lys-Gly) (interchain with G-Cter in ubiquitin)" evidence="55">
    <location>
        <position position="55"/>
    </location>
</feature>
<feature type="cross-link" description="Glycyl lysine isopeptide (Lys-Gly) (interchain with G-Cter in ubiquitin)" evidence="44">
    <location>
        <position position="174"/>
    </location>
</feature>
<feature type="splice variant" id="VSP_004118" description="In isoform 3." evidence="61">
    <location>
        <begin position="26"/>
        <end position="85"/>
    </location>
</feature>
<feature type="splice variant" id="VSP_004119" description="In isoform 2." evidence="59">
    <location>
        <begin position="93"/>
        <end position="111"/>
    </location>
</feature>
<feature type="mutagenesis site" description="Abolishes homooligomerization." evidence="20">
    <original>I</original>
    <variation>A</variation>
    <location>
        <position position="8"/>
    </location>
</feature>
<feature type="mutagenesis site" description="Abolishes homooligomerization." evidence="11 20">
    <original>L</original>
    <variation>A</variation>
    <location>
        <position position="12"/>
    </location>
</feature>
<feature type="mutagenesis site" description="Abolishes promotion of apoptosis and NF-kappa-B activation." evidence="11 20">
    <original>L</original>
    <variation>Q</variation>
    <location>
        <position position="12"/>
    </location>
</feature>
<feature type="mutagenesis site" description="Abolishes interaction with PYDC1." evidence="19 20 28">
    <original>E</original>
    <variation>A</variation>
    <location>
        <position position="13"/>
    </location>
</feature>
<feature type="mutagenesis site" description="Abolishes interaction with NLRP2." evidence="19 20 28">
    <original>E</original>
    <variation>W</variation>
    <location>
        <position position="13"/>
    </location>
</feature>
<feature type="mutagenesis site" description="Abolishes homooligomerization." evidence="20">
    <original>L</original>
    <variation>A</variation>
    <location>
        <position position="15"/>
    </location>
</feature>
<feature type="mutagenesis site" description="Abolishes homooligomerization." evidence="20">
    <original>E</original>
    <variation>A</variation>
    <location>
        <position position="19"/>
    </location>
</feature>
<feature type="mutagenesis site" description="Abolishes homooligomerization." evidence="20">
    <original>L</original>
    <variation>A</variation>
    <location>
        <position position="20"/>
    </location>
</feature>
<feature type="mutagenesis site" description="Abolishes homooligomerization." evidence="20">
    <original>K</original>
    <variation>A</variation>
    <variation>E</variation>
    <variation>Q</variation>
    <location>
        <position position="21"/>
    </location>
</feature>
<feature type="mutagenesis site" description="Abolishes homooligomerization." evidence="20">
    <original>F</original>
    <variation>A</variation>
    <location>
        <position position="23"/>
    </location>
</feature>
<feature type="mutagenesis site" description="Abolishes homooligomerization." evidence="20">
    <original>L</original>
    <variation>A</variation>
    <variation>E</variation>
    <variation>G</variation>
    <variation>K</variation>
    <variation>N</variation>
    <variation>Q</variation>
    <location>
        <position position="25"/>
    </location>
</feature>
<feature type="mutagenesis site" description="Abolishes homooligomerization." evidence="20">
    <original>K</original>
    <variation>A</variation>
    <variation>Q</variation>
    <location>
        <position position="26"/>
    </location>
</feature>
<feature type="mutagenesis site" description="Abolishes homooligomerization." evidence="20">
    <original>L</original>
    <variation>A</variation>
    <location>
        <position position="27"/>
    </location>
</feature>
<feature type="mutagenesis site" description="Abolishes interaction with PYDC1." evidence="28">
    <original>Y</original>
    <variation>A</variation>
    <location>
        <position position="36"/>
    </location>
</feature>
<feature type="mutagenesis site" description="Abolishes homooligomerization." evidence="20">
    <original>P</original>
    <variation>A</variation>
    <location>
        <position position="40"/>
    </location>
</feature>
<feature type="mutagenesis site" description="Abolishes homooligomerization." evidence="20">
    <original>R</original>
    <variation>A</variation>
    <variation>Q</variation>
    <variation>W</variation>
    <location>
        <position position="41"/>
    </location>
</feature>
<feature type="mutagenesis site" description="Abolishes homooligomerization." evidence="20">
    <original>L</original>
    <variation>A</variation>
    <location>
        <position position="45"/>
    </location>
</feature>
<feature type="mutagenesis site" description="Abolishes homooligomerization." evidence="20">
    <original>M</original>
    <variation>A</variation>
    <variation>N</variation>
    <variation>Q</variation>
    <location>
        <position position="47"/>
    </location>
</feature>
<feature type="mutagenesis site" description="Abolishes homooligomerization." evidence="20 28">
    <original>D</original>
    <variation>A</variation>
    <variation>K</variation>
    <location>
        <position position="48"/>
    </location>
</feature>
<feature type="mutagenesis site" description="Abolishes interaction with PYDC1." evidence="20 28">
    <original>D</original>
    <variation>A</variation>
    <location>
        <position position="48"/>
    </location>
</feature>
<feature type="mutagenesis site" description="Abolishes homooligomerization." evidence="20">
    <original>L</original>
    <variation>A</variation>
    <location>
        <position position="52"/>
    </location>
</feature>
<feature type="mutagenesis site" description="Strongly reduced PELI1-mediated ubiquitination." evidence="55">
    <original>K</original>
    <variation>R</variation>
    <location>
        <position position="55"/>
    </location>
</feature>
<feature type="mutagenesis site" description="Abolishes homooligomerization." evidence="20">
    <original>L</original>
    <variation>A</variation>
    <location>
        <position position="56"/>
    </location>
</feature>
<feature type="mutagenesis site" description="Abolishes homooligomerization." evidence="20">
    <original>E</original>
    <variation>A</variation>
    <location>
        <position position="62"/>
    </location>
</feature>
<feature type="mutagenesis site" description="Abolishes homooligomerization." evidence="20">
    <original>E</original>
    <variation>A</variation>
    <location>
        <position position="67"/>
    </location>
</feature>
<feature type="mutagenesis site" description="Abolishes homooligomerization." evidence="20">
    <original>L</original>
    <variation>A</variation>
    <location>
        <position position="68"/>
    </location>
</feature>
<feature type="mutagenesis site" description="Abolishes homooligomerization." evidence="20">
    <original>V</original>
    <variation>A</variation>
    <location>
        <position position="72"/>
    </location>
</feature>
<feature type="mutagenesis site" description="Abolishes homooligomerization." evidence="20">
    <original>M</original>
    <variation>A</variation>
    <location>
        <position position="76"/>
    </location>
</feature>
<feature type="mutagenesis site" description="Loss of inflammasome activation activity." evidence="44">
    <original>K</original>
    <variation>R</variation>
    <location>
        <position position="174"/>
    </location>
</feature>
<feature type="helix" evidence="71">
    <location>
        <begin position="3"/>
        <end position="14"/>
    </location>
</feature>
<feature type="helix" evidence="71">
    <location>
        <begin position="17"/>
        <end position="27"/>
    </location>
</feature>
<feature type="strand" evidence="69">
    <location>
        <begin position="34"/>
        <end position="36"/>
    </location>
</feature>
<feature type="helix" evidence="71">
    <location>
        <begin position="41"/>
        <end position="44"/>
    </location>
</feature>
<feature type="helix" evidence="71">
    <location>
        <begin position="49"/>
        <end position="59"/>
    </location>
</feature>
<feature type="helix" evidence="71">
    <location>
        <begin position="62"/>
        <end position="75"/>
    </location>
</feature>
<feature type="helix" evidence="71">
    <location>
        <begin position="79"/>
        <end position="89"/>
    </location>
</feature>
<feature type="helix" evidence="70">
    <location>
        <begin position="114"/>
        <end position="117"/>
    </location>
</feature>
<feature type="helix" evidence="70">
    <location>
        <begin position="119"/>
        <end position="125"/>
    </location>
</feature>
<feature type="helix" evidence="70">
    <location>
        <begin position="129"/>
        <end position="136"/>
    </location>
</feature>
<feature type="turn" evidence="70">
    <location>
        <begin position="138"/>
        <end position="140"/>
    </location>
</feature>
<feature type="helix" evidence="70">
    <location>
        <begin position="143"/>
        <end position="150"/>
    </location>
</feature>
<feature type="strand" evidence="70">
    <location>
        <begin position="152"/>
        <end position="154"/>
    </location>
</feature>
<feature type="helix" evidence="70">
    <location>
        <begin position="155"/>
        <end position="164"/>
    </location>
</feature>
<feature type="helix" evidence="70">
    <location>
        <begin position="165"/>
        <end position="168"/>
    </location>
</feature>
<feature type="helix" evidence="70">
    <location>
        <begin position="171"/>
        <end position="184"/>
    </location>
</feature>
<feature type="helix" evidence="70">
    <location>
        <begin position="186"/>
        <end position="195"/>
    </location>
</feature>
<protein>
    <recommendedName>
        <fullName evidence="58">Apoptosis-associated speck-like protein containing a CARD</fullName>
        <shortName evidence="58">hASC</shortName>
    </recommendedName>
    <alternativeName>
        <fullName evidence="63">Caspase recruitment domain-containing protein 5</fullName>
    </alternativeName>
    <alternativeName>
        <fullName evidence="62">PYD and CARD domain-containing protein</fullName>
    </alternativeName>
    <alternativeName>
        <fullName evidence="60">Target of methylation-induced silencing 1</fullName>
    </alternativeName>
</protein>
<evidence type="ECO:0000250" key="1">
    <source>
        <dbReference type="UniProtKB" id="Q9EPB4"/>
    </source>
</evidence>
<evidence type="ECO:0000255" key="2">
    <source>
        <dbReference type="PROSITE-ProRule" id="PRU00046"/>
    </source>
</evidence>
<evidence type="ECO:0000255" key="3">
    <source>
        <dbReference type="PROSITE-ProRule" id="PRU00061"/>
    </source>
</evidence>
<evidence type="ECO:0000269" key="4">
    <source>
    </source>
</evidence>
<evidence type="ECO:0000269" key="5">
    <source>
    </source>
</evidence>
<evidence type="ECO:0000269" key="6">
    <source>
    </source>
</evidence>
<evidence type="ECO:0000269" key="7">
    <source>
    </source>
</evidence>
<evidence type="ECO:0000269" key="8">
    <source>
    </source>
</evidence>
<evidence type="ECO:0000269" key="9">
    <source>
    </source>
</evidence>
<evidence type="ECO:0000269" key="10">
    <source>
    </source>
</evidence>
<evidence type="ECO:0000269" key="11">
    <source>
    </source>
</evidence>
<evidence type="ECO:0000269" key="12">
    <source>
    </source>
</evidence>
<evidence type="ECO:0000269" key="13">
    <source>
    </source>
</evidence>
<evidence type="ECO:0000269" key="14">
    <source>
    </source>
</evidence>
<evidence type="ECO:0000269" key="15">
    <source>
    </source>
</evidence>
<evidence type="ECO:0000269" key="16">
    <source>
    </source>
</evidence>
<evidence type="ECO:0000269" key="17">
    <source>
    </source>
</evidence>
<evidence type="ECO:0000269" key="18">
    <source>
    </source>
</evidence>
<evidence type="ECO:0000269" key="19">
    <source>
    </source>
</evidence>
<evidence type="ECO:0000269" key="20">
    <source>
    </source>
</evidence>
<evidence type="ECO:0000269" key="21">
    <source>
    </source>
</evidence>
<evidence type="ECO:0000269" key="22">
    <source>
    </source>
</evidence>
<evidence type="ECO:0000269" key="23">
    <source>
    </source>
</evidence>
<evidence type="ECO:0000269" key="24">
    <source>
    </source>
</evidence>
<evidence type="ECO:0000269" key="25">
    <source>
    </source>
</evidence>
<evidence type="ECO:0000269" key="26">
    <source>
    </source>
</evidence>
<evidence type="ECO:0000269" key="27">
    <source>
    </source>
</evidence>
<evidence type="ECO:0000269" key="28">
    <source>
    </source>
</evidence>
<evidence type="ECO:0000269" key="29">
    <source>
    </source>
</evidence>
<evidence type="ECO:0000269" key="30">
    <source>
    </source>
</evidence>
<evidence type="ECO:0000269" key="31">
    <source>
    </source>
</evidence>
<evidence type="ECO:0000269" key="32">
    <source>
    </source>
</evidence>
<evidence type="ECO:0000269" key="33">
    <source>
    </source>
</evidence>
<evidence type="ECO:0000269" key="34">
    <source>
    </source>
</evidence>
<evidence type="ECO:0000269" key="35">
    <source>
    </source>
</evidence>
<evidence type="ECO:0000269" key="36">
    <source>
    </source>
</evidence>
<evidence type="ECO:0000269" key="37">
    <source>
    </source>
</evidence>
<evidence type="ECO:0000269" key="38">
    <source>
    </source>
</evidence>
<evidence type="ECO:0000269" key="39">
    <source>
    </source>
</evidence>
<evidence type="ECO:0000269" key="40">
    <source>
    </source>
</evidence>
<evidence type="ECO:0000269" key="41">
    <source>
    </source>
</evidence>
<evidence type="ECO:0000269" key="42">
    <source>
    </source>
</evidence>
<evidence type="ECO:0000269" key="43">
    <source>
    </source>
</evidence>
<evidence type="ECO:0000269" key="44">
    <source>
    </source>
</evidence>
<evidence type="ECO:0000269" key="45">
    <source>
    </source>
</evidence>
<evidence type="ECO:0000269" key="46">
    <source>
    </source>
</evidence>
<evidence type="ECO:0000269" key="47">
    <source>
    </source>
</evidence>
<evidence type="ECO:0000269" key="48">
    <source>
    </source>
</evidence>
<evidence type="ECO:0000269" key="49">
    <source>
    </source>
</evidence>
<evidence type="ECO:0000269" key="50">
    <source>
    </source>
</evidence>
<evidence type="ECO:0000269" key="51">
    <source>
    </source>
</evidence>
<evidence type="ECO:0000269" key="52">
    <source>
    </source>
</evidence>
<evidence type="ECO:0000269" key="53">
    <source>
    </source>
</evidence>
<evidence type="ECO:0000269" key="54">
    <source>
    </source>
</evidence>
<evidence type="ECO:0000269" key="55">
    <source>
    </source>
</evidence>
<evidence type="ECO:0000269" key="56">
    <source>
    </source>
</evidence>
<evidence type="ECO:0000269" key="57">
    <source>
    </source>
</evidence>
<evidence type="ECO:0000303" key="58">
    <source>
    </source>
</evidence>
<evidence type="ECO:0000303" key="59">
    <source>
    </source>
</evidence>
<evidence type="ECO:0000303" key="60">
    <source>
    </source>
</evidence>
<evidence type="ECO:0000303" key="61">
    <source>
    </source>
</evidence>
<evidence type="ECO:0000303" key="62">
    <source ref="4"/>
</evidence>
<evidence type="ECO:0000303" key="63">
    <source ref="5"/>
</evidence>
<evidence type="ECO:0000305" key="64"/>
<evidence type="ECO:0000312" key="65">
    <source>
        <dbReference type="HGNC" id="HGNC:16608"/>
    </source>
</evidence>
<evidence type="ECO:0007744" key="66">
    <source>
        <dbReference type="PDB" id="3J63"/>
    </source>
</evidence>
<evidence type="ECO:0007744" key="67">
    <source>
        <dbReference type="PDB" id="6K99"/>
    </source>
</evidence>
<evidence type="ECO:0007744" key="68">
    <source>
        <dbReference type="PDB" id="7KEU"/>
    </source>
</evidence>
<evidence type="ECO:0007829" key="69">
    <source>
        <dbReference type="PDB" id="1UCP"/>
    </source>
</evidence>
<evidence type="ECO:0007829" key="70">
    <source>
        <dbReference type="PDB" id="6KI0"/>
    </source>
</evidence>
<evidence type="ECO:0007829" key="71">
    <source>
        <dbReference type="PDB" id="7E5B"/>
    </source>
</evidence>
<accession>Q9ULZ3</accession>
<accession>Q96D12</accession>
<accession>Q9BSZ5</accession>
<accession>Q9HBD0</accession>
<accession>Q9NXJ8</accession>
<organism>
    <name type="scientific">Homo sapiens</name>
    <name type="common">Human</name>
    <dbReference type="NCBI Taxonomy" id="9606"/>
    <lineage>
        <taxon>Eukaryota</taxon>
        <taxon>Metazoa</taxon>
        <taxon>Chordata</taxon>
        <taxon>Craniata</taxon>
        <taxon>Vertebrata</taxon>
        <taxon>Euteleostomi</taxon>
        <taxon>Mammalia</taxon>
        <taxon>Eutheria</taxon>
        <taxon>Euarchontoglires</taxon>
        <taxon>Primates</taxon>
        <taxon>Haplorrhini</taxon>
        <taxon>Catarrhini</taxon>
        <taxon>Hominidae</taxon>
        <taxon>Homo</taxon>
    </lineage>
</organism>
<gene>
    <name evidence="62 65" type="primary">PYCARD</name>
    <name evidence="58" type="synonym">ASC</name>
    <name evidence="63" type="synonym">CARD5</name>
    <name evidence="60" type="synonym">TMS1</name>
</gene>